<keyword id="KW-0002">3D-structure</keyword>
<keyword id="KW-0007">Acetylation</keyword>
<keyword id="KW-0025">Alternative splicing</keyword>
<keyword id="KW-0067">ATP-binding</keyword>
<keyword id="KW-0130">Cell adhesion</keyword>
<keyword id="KW-0963">Cytoplasm</keyword>
<keyword id="KW-0206">Cytoskeleton</keyword>
<keyword id="KW-0418">Kinase</keyword>
<keyword id="KW-0449">Lipoprotein</keyword>
<keyword id="KW-0460">Magnesium</keyword>
<keyword id="KW-0464">Manganese</keyword>
<keyword id="KW-0479">Metal-binding</keyword>
<keyword id="KW-0519">Myristate</keyword>
<keyword id="KW-0547">Nucleotide-binding</keyword>
<keyword id="KW-0597">Phosphoprotein</keyword>
<keyword id="KW-1267">Proteomics identification</keyword>
<keyword id="KW-1185">Reference proteome</keyword>
<keyword id="KW-0727">SH2 domain</keyword>
<keyword id="KW-0728">SH3 domain</keyword>
<keyword id="KW-0808">Transferase</keyword>
<keyword id="KW-0829">Tyrosine-protein kinase</keyword>
<keyword id="KW-0832">Ubl conjugation</keyword>
<dbReference type="EC" id="2.7.10.2"/>
<dbReference type="EMBL" id="M35296">
    <property type="protein sequence ID" value="AAA35553.1"/>
    <property type="molecule type" value="mRNA"/>
</dbReference>
<dbReference type="EMBL" id="FJ542283">
    <property type="protein sequence ID" value="ACK76601.1"/>
    <property type="molecule type" value="mRNA"/>
</dbReference>
<dbReference type="EMBL" id="FJ542284">
    <property type="protein sequence ID" value="ACK76602.1"/>
    <property type="molecule type" value="mRNA"/>
</dbReference>
<dbReference type="EMBL" id="FJ542285">
    <property type="protein sequence ID" value="ACK76603.1"/>
    <property type="molecule type" value="mRNA"/>
</dbReference>
<dbReference type="EMBL" id="FJ542286">
    <property type="protein sequence ID" value="ACK76604.1"/>
    <property type="molecule type" value="mRNA"/>
</dbReference>
<dbReference type="EMBL" id="AK311045">
    <property type="status" value="NOT_ANNOTATED_CDS"/>
    <property type="molecule type" value="mRNA"/>
</dbReference>
<dbReference type="EMBL" id="BX538317">
    <property type="protein sequence ID" value="CAD98092.1"/>
    <property type="status" value="ALT_INIT"/>
    <property type="molecule type" value="mRNA"/>
</dbReference>
<dbReference type="EMBL" id="DQ009672">
    <property type="protein sequence ID" value="AAY16984.1"/>
    <property type="molecule type" value="Genomic_DNA"/>
</dbReference>
<dbReference type="EMBL" id="AL139132">
    <property type="status" value="NOT_ANNOTATED_CDS"/>
    <property type="molecule type" value="Genomic_DNA"/>
</dbReference>
<dbReference type="EMBL" id="AL359179">
    <property type="status" value="NOT_ANNOTATED_CDS"/>
    <property type="molecule type" value="Genomic_DNA"/>
</dbReference>
<dbReference type="EMBL" id="AL512326">
    <property type="status" value="NOT_ANNOTATED_CDS"/>
    <property type="molecule type" value="Genomic_DNA"/>
</dbReference>
<dbReference type="EMBL" id="CH471067">
    <property type="protein sequence ID" value="EAW91040.1"/>
    <property type="molecule type" value="Genomic_DNA"/>
</dbReference>
<dbReference type="EMBL" id="BC065912">
    <property type="protein sequence ID" value="AAH65912.1"/>
    <property type="molecule type" value="mRNA"/>
</dbReference>
<dbReference type="CCDS" id="CCDS30947.1">
    <molecule id="P42684-1"/>
</dbReference>
<dbReference type="CCDS" id="CCDS41441.2">
    <molecule id="P42684-3"/>
</dbReference>
<dbReference type="CCDS" id="CCDS44282.1">
    <molecule id="P42684-10"/>
</dbReference>
<dbReference type="CCDS" id="CCDS53435.1">
    <molecule id="P42684-4"/>
</dbReference>
<dbReference type="CCDS" id="CCDS53436.1">
    <molecule id="P42684-6"/>
</dbReference>
<dbReference type="CCDS" id="CCDS53437.1">
    <molecule id="P42684-7"/>
</dbReference>
<dbReference type="CCDS" id="CCDS53438.1">
    <molecule id="P42684-5"/>
</dbReference>
<dbReference type="PIR" id="A35962">
    <property type="entry name" value="A35962"/>
</dbReference>
<dbReference type="PIR" id="B35962">
    <property type="entry name" value="B35962"/>
</dbReference>
<dbReference type="RefSeq" id="NP_001129472.1">
    <molecule id="P42684-10"/>
    <property type="nucleotide sequence ID" value="NM_001136000.3"/>
</dbReference>
<dbReference type="RefSeq" id="NP_001129473.1">
    <molecule id="P42684-8"/>
    <property type="nucleotide sequence ID" value="NM_001136001.2"/>
</dbReference>
<dbReference type="RefSeq" id="NP_001161708.1">
    <molecule id="P42684-6"/>
    <property type="nucleotide sequence ID" value="NM_001168236.2"/>
</dbReference>
<dbReference type="RefSeq" id="NP_001161709.1">
    <molecule id="P42684-5"/>
    <property type="nucleotide sequence ID" value="NM_001168237.2"/>
</dbReference>
<dbReference type="RefSeq" id="NP_001161710.1">
    <molecule id="P42684-7"/>
    <property type="nucleotide sequence ID" value="NM_001168238.2"/>
</dbReference>
<dbReference type="RefSeq" id="NP_001161711.1">
    <molecule id="P42684-4"/>
    <property type="nucleotide sequence ID" value="NM_001168239.2"/>
</dbReference>
<dbReference type="RefSeq" id="NP_005149.4">
    <molecule id="P42684-3"/>
    <property type="nucleotide sequence ID" value="NM_005158.4"/>
</dbReference>
<dbReference type="RefSeq" id="NP_009298.1">
    <molecule id="P42684-1"/>
    <property type="nucleotide sequence ID" value="NM_007314.4"/>
</dbReference>
<dbReference type="RefSeq" id="XP_005245145.1">
    <molecule id="P42684-2"/>
    <property type="nucleotide sequence ID" value="XM_005245088.3"/>
</dbReference>
<dbReference type="PDB" id="2ECD">
    <property type="method" value="NMR"/>
    <property type="chains" value="A=163-268"/>
</dbReference>
<dbReference type="PDB" id="2KK1">
    <property type="method" value="NMR"/>
    <property type="chains" value="A=1058-1182"/>
</dbReference>
<dbReference type="PDB" id="2XYN">
    <property type="method" value="X-ray"/>
    <property type="resolution" value="2.81 A"/>
    <property type="chains" value="A/B/C=279-546"/>
</dbReference>
<dbReference type="PDB" id="3GVU">
    <property type="method" value="X-ray"/>
    <property type="resolution" value="2.05 A"/>
    <property type="chains" value="A=279-546"/>
</dbReference>
<dbReference type="PDB" id="3HMI">
    <property type="method" value="X-ray"/>
    <property type="resolution" value="1.65 A"/>
    <property type="chains" value="A=279-546"/>
</dbReference>
<dbReference type="PDB" id="3ULR">
    <property type="method" value="X-ray"/>
    <property type="resolution" value="1.65 A"/>
    <property type="chains" value="C=563-579"/>
</dbReference>
<dbReference type="PDB" id="4EIH">
    <property type="method" value="X-ray"/>
    <property type="resolution" value="1.20 A"/>
    <property type="chains" value="A=165-273"/>
</dbReference>
<dbReference type="PDB" id="5NP3">
    <property type="method" value="X-ray"/>
    <property type="resolution" value="2.00 A"/>
    <property type="chains" value="A/B/C/D=110-166"/>
</dbReference>
<dbReference type="PDB" id="5NP5">
    <property type="method" value="X-ray"/>
    <property type="resolution" value="1.40 A"/>
    <property type="chains" value="A/B=110-166"/>
</dbReference>
<dbReference type="PDBsum" id="2ECD"/>
<dbReference type="PDBsum" id="2KK1"/>
<dbReference type="PDBsum" id="2XYN"/>
<dbReference type="PDBsum" id="3GVU"/>
<dbReference type="PDBsum" id="3HMI"/>
<dbReference type="PDBsum" id="3ULR"/>
<dbReference type="PDBsum" id="4EIH"/>
<dbReference type="PDBsum" id="5NP3"/>
<dbReference type="PDBsum" id="5NP5"/>
<dbReference type="BMRB" id="P42684"/>
<dbReference type="EMDB" id="EMD-41169"/>
<dbReference type="SMR" id="P42684"/>
<dbReference type="BioGRID" id="106545">
    <property type="interactions" value="110"/>
</dbReference>
<dbReference type="CORUM" id="P42684"/>
<dbReference type="DIP" id="DIP-91N"/>
<dbReference type="FunCoup" id="P42684">
    <property type="interactions" value="1292"/>
</dbReference>
<dbReference type="IntAct" id="P42684">
    <property type="interactions" value="89"/>
</dbReference>
<dbReference type="MINT" id="P42684"/>
<dbReference type="STRING" id="9606.ENSP00000427562"/>
<dbReference type="BindingDB" id="P42684"/>
<dbReference type="ChEMBL" id="CHEMBL4014"/>
<dbReference type="DrugBank" id="DB00171">
    <property type="generic name" value="ATP"/>
</dbReference>
<dbReference type="DrugBank" id="DB01254">
    <property type="generic name" value="Dasatinib"/>
</dbReference>
<dbReference type="DrugBank" id="DB12010">
    <property type="generic name" value="Fostamatinib"/>
</dbReference>
<dbReference type="DrugBank" id="DB07664">
    <property type="generic name" value="K-00546"/>
</dbReference>
<dbReference type="DrugBank" id="DB05184">
    <property type="generic name" value="XL228"/>
</dbReference>
<dbReference type="DrugCentral" id="P42684"/>
<dbReference type="GuidetoPHARMACOLOGY" id="1924"/>
<dbReference type="MoonDB" id="P42684">
    <property type="type" value="Predicted"/>
</dbReference>
<dbReference type="GlyGen" id="P42684">
    <property type="glycosylation" value="3 sites, 1 N-linked glycan (1 site), 1 O-linked glycan (1 site)"/>
</dbReference>
<dbReference type="iPTMnet" id="P42684"/>
<dbReference type="PhosphoSitePlus" id="P42684"/>
<dbReference type="BioMuta" id="ABL2"/>
<dbReference type="DMDM" id="1168268"/>
<dbReference type="CPTAC" id="CPTAC-3138"/>
<dbReference type="CPTAC" id="CPTAC-3139"/>
<dbReference type="jPOST" id="P42684"/>
<dbReference type="MassIVE" id="P42684"/>
<dbReference type="PaxDb" id="9606-ENSP00000427562"/>
<dbReference type="PeptideAtlas" id="P42684"/>
<dbReference type="ProteomicsDB" id="55528">
    <molecule id="P42684-1"/>
</dbReference>
<dbReference type="ProteomicsDB" id="55529">
    <molecule id="P42684-10"/>
</dbReference>
<dbReference type="ProteomicsDB" id="55530">
    <molecule id="P42684-2"/>
</dbReference>
<dbReference type="ProteomicsDB" id="55531">
    <molecule id="P42684-3"/>
</dbReference>
<dbReference type="ProteomicsDB" id="55532">
    <molecule id="P42684-4"/>
</dbReference>
<dbReference type="ProteomicsDB" id="55533">
    <molecule id="P42684-5"/>
</dbReference>
<dbReference type="ProteomicsDB" id="55534">
    <molecule id="P42684-6"/>
</dbReference>
<dbReference type="ProteomicsDB" id="55535">
    <molecule id="P42684-7"/>
</dbReference>
<dbReference type="ProteomicsDB" id="55536">
    <molecule id="P42684-8"/>
</dbReference>
<dbReference type="Pumba" id="P42684"/>
<dbReference type="Antibodypedia" id="736">
    <property type="antibodies" value="510 antibodies from 38 providers"/>
</dbReference>
<dbReference type="DNASU" id="27"/>
<dbReference type="Ensembl" id="ENST00000344730.8">
    <molecule id="P42684-10"/>
    <property type="protein sequence ID" value="ENSP00000339209.3"/>
    <property type="gene ID" value="ENSG00000143322.22"/>
</dbReference>
<dbReference type="Ensembl" id="ENST00000367623.8">
    <molecule id="P42684-6"/>
    <property type="protein sequence ID" value="ENSP00000356595.4"/>
    <property type="gene ID" value="ENSG00000143322.22"/>
</dbReference>
<dbReference type="Ensembl" id="ENST00000502732.6">
    <molecule id="P42684-1"/>
    <property type="protein sequence ID" value="ENSP00000427562.1"/>
    <property type="gene ID" value="ENSG00000143322.22"/>
</dbReference>
<dbReference type="Ensembl" id="ENST00000504405.5">
    <molecule id="P42684-4"/>
    <property type="protein sequence ID" value="ENSP00000426831.1"/>
    <property type="gene ID" value="ENSG00000143322.22"/>
</dbReference>
<dbReference type="Ensembl" id="ENST00000507173.5">
    <molecule id="P42684-7"/>
    <property type="protein sequence ID" value="ENSP00000423413.1"/>
    <property type="gene ID" value="ENSG00000143322.22"/>
</dbReference>
<dbReference type="Ensembl" id="ENST00000511413.5">
    <molecule id="P42684-5"/>
    <property type="protein sequence ID" value="ENSP00000424697.1"/>
    <property type="gene ID" value="ENSG00000143322.22"/>
</dbReference>
<dbReference type="Ensembl" id="ENST00000512653.5">
    <molecule id="P42684-3"/>
    <property type="protein sequence ID" value="ENSP00000423578.1"/>
    <property type="gene ID" value="ENSG00000143322.22"/>
</dbReference>
<dbReference type="GeneID" id="27"/>
<dbReference type="KEGG" id="hsa:27"/>
<dbReference type="MANE-Select" id="ENST00000502732.6">
    <property type="protein sequence ID" value="ENSP00000427562.1"/>
    <property type="RefSeq nucleotide sequence ID" value="NM_007314.4"/>
    <property type="RefSeq protein sequence ID" value="NP_009298.1"/>
</dbReference>
<dbReference type="UCSC" id="uc001gmg.5">
    <molecule id="P42684-1"/>
    <property type="organism name" value="human"/>
</dbReference>
<dbReference type="AGR" id="HGNC:77"/>
<dbReference type="CTD" id="27"/>
<dbReference type="DisGeNET" id="27"/>
<dbReference type="GeneCards" id="ABL2"/>
<dbReference type="HGNC" id="HGNC:77">
    <property type="gene designation" value="ABL2"/>
</dbReference>
<dbReference type="HPA" id="ENSG00000143322">
    <property type="expression patterns" value="Low tissue specificity"/>
</dbReference>
<dbReference type="MalaCards" id="ABL2"/>
<dbReference type="MIM" id="164690">
    <property type="type" value="gene"/>
</dbReference>
<dbReference type="neXtProt" id="NX_P42684"/>
<dbReference type="OpenTargets" id="ENSG00000143322"/>
<dbReference type="PharmGKB" id="PA24414"/>
<dbReference type="VEuPathDB" id="HostDB:ENSG00000143322"/>
<dbReference type="eggNOG" id="KOG4278">
    <property type="taxonomic scope" value="Eukaryota"/>
</dbReference>
<dbReference type="GeneTree" id="ENSGT00940000153838"/>
<dbReference type="HOGENOM" id="CLU_002795_0_0_1"/>
<dbReference type="InParanoid" id="P42684"/>
<dbReference type="OMA" id="NIFTQHX"/>
<dbReference type="OrthoDB" id="98077at2759"/>
<dbReference type="PAN-GO" id="P42684">
    <property type="GO annotations" value="1 GO annotation based on evolutionary models"/>
</dbReference>
<dbReference type="PhylomeDB" id="P42684"/>
<dbReference type="TreeFam" id="TF105081"/>
<dbReference type="BRENDA" id="2.7.10.2">
    <property type="organism ID" value="2681"/>
</dbReference>
<dbReference type="PathwayCommons" id="P42684"/>
<dbReference type="Reactome" id="R-HSA-428890">
    <property type="pathway name" value="Role of ABL in ROBO-SLIT signaling"/>
</dbReference>
<dbReference type="Reactome" id="R-HSA-9013149">
    <property type="pathway name" value="RAC1 GTPase cycle"/>
</dbReference>
<dbReference type="Reactome" id="R-HSA-9013423">
    <property type="pathway name" value="RAC3 GTPase cycle"/>
</dbReference>
<dbReference type="Reactome" id="R-HSA-9706369">
    <property type="pathway name" value="Negative regulation of FLT3"/>
</dbReference>
<dbReference type="SignaLink" id="P42684"/>
<dbReference type="SIGNOR" id="P42684"/>
<dbReference type="BioGRID-ORCS" id="27">
    <property type="hits" value="8 hits in 1191 CRISPR screens"/>
</dbReference>
<dbReference type="ChiTaRS" id="ABL2">
    <property type="organism name" value="human"/>
</dbReference>
<dbReference type="EvolutionaryTrace" id="P42684"/>
<dbReference type="GeneWiki" id="ABL2"/>
<dbReference type="GenomeRNAi" id="27"/>
<dbReference type="Pharos" id="P42684">
    <property type="development level" value="Tchem"/>
</dbReference>
<dbReference type="PRO" id="PR:P42684"/>
<dbReference type="Proteomes" id="UP000005640">
    <property type="component" value="Chromosome 1"/>
</dbReference>
<dbReference type="RNAct" id="P42684">
    <property type="molecule type" value="protein"/>
</dbReference>
<dbReference type="Bgee" id="ENSG00000143322">
    <property type="expression patterns" value="Expressed in tendon of biceps brachii and 175 other cell types or tissues"/>
</dbReference>
<dbReference type="GO" id="GO:0015629">
    <property type="term" value="C:actin cytoskeleton"/>
    <property type="evidence" value="ECO:0000304"/>
    <property type="project" value="UniProtKB"/>
</dbReference>
<dbReference type="GO" id="GO:0005829">
    <property type="term" value="C:cytosol"/>
    <property type="evidence" value="ECO:0000304"/>
    <property type="project" value="Reactome"/>
</dbReference>
<dbReference type="GO" id="GO:0005886">
    <property type="term" value="C:plasma membrane"/>
    <property type="evidence" value="ECO:0000318"/>
    <property type="project" value="GO_Central"/>
</dbReference>
<dbReference type="GO" id="GO:0051015">
    <property type="term" value="F:actin filament binding"/>
    <property type="evidence" value="ECO:0000304"/>
    <property type="project" value="UniProtKB"/>
</dbReference>
<dbReference type="GO" id="GO:0003785">
    <property type="term" value="F:actin monomer binding"/>
    <property type="evidence" value="ECO:0000304"/>
    <property type="project" value="UniProtKB"/>
</dbReference>
<dbReference type="GO" id="GO:0005524">
    <property type="term" value="F:ATP binding"/>
    <property type="evidence" value="ECO:0007669"/>
    <property type="project" value="UniProtKB-KW"/>
</dbReference>
<dbReference type="GO" id="GO:0008047">
    <property type="term" value="F:enzyme activator activity"/>
    <property type="evidence" value="ECO:0000314"/>
    <property type="project" value="BHF-UCL"/>
</dbReference>
<dbReference type="GO" id="GO:0019899">
    <property type="term" value="F:enzyme binding"/>
    <property type="evidence" value="ECO:0000353"/>
    <property type="project" value="BHF-UCL"/>
</dbReference>
<dbReference type="GO" id="GO:0000287">
    <property type="term" value="F:magnesium ion binding"/>
    <property type="evidence" value="ECO:0000314"/>
    <property type="project" value="UniProtKB"/>
</dbReference>
<dbReference type="GO" id="GO:0030145">
    <property type="term" value="F:manganese ion binding"/>
    <property type="evidence" value="ECO:0000314"/>
    <property type="project" value="UniProtKB"/>
</dbReference>
<dbReference type="GO" id="GO:0004715">
    <property type="term" value="F:non-membrane spanning protein tyrosine kinase activity"/>
    <property type="evidence" value="ECO:0000304"/>
    <property type="project" value="UniProtKB"/>
</dbReference>
<dbReference type="GO" id="GO:0001784">
    <property type="term" value="F:phosphotyrosine residue binding"/>
    <property type="evidence" value="ECO:0000353"/>
    <property type="project" value="CAFA"/>
</dbReference>
<dbReference type="GO" id="GO:0004672">
    <property type="term" value="F:protein kinase activity"/>
    <property type="evidence" value="ECO:0000304"/>
    <property type="project" value="ProtInc"/>
</dbReference>
<dbReference type="GO" id="GO:0004713">
    <property type="term" value="F:protein tyrosine kinase activity"/>
    <property type="evidence" value="ECO:0000314"/>
    <property type="project" value="UniProtKB"/>
</dbReference>
<dbReference type="GO" id="GO:0007155">
    <property type="term" value="P:cell adhesion"/>
    <property type="evidence" value="ECO:0007669"/>
    <property type="project" value="UniProtKB-KW"/>
</dbReference>
<dbReference type="GO" id="GO:0034599">
    <property type="term" value="P:cellular response to oxidative stress"/>
    <property type="evidence" value="ECO:0000314"/>
    <property type="project" value="BHF-UCL"/>
</dbReference>
<dbReference type="GO" id="GO:0071300">
    <property type="term" value="P:cellular response to retinoic acid"/>
    <property type="evidence" value="ECO:0000315"/>
    <property type="project" value="BHF-UCL"/>
</dbReference>
<dbReference type="GO" id="GO:0007173">
    <property type="term" value="P:epidermal growth factor receptor signaling pathway"/>
    <property type="evidence" value="ECO:0000318"/>
    <property type="project" value="GO_Central"/>
</dbReference>
<dbReference type="GO" id="GO:0035640">
    <property type="term" value="P:exploration behavior"/>
    <property type="evidence" value="ECO:0000250"/>
    <property type="project" value="ARUK-UCL"/>
</dbReference>
<dbReference type="GO" id="GO:0035024">
    <property type="term" value="P:negative regulation of Rho protein signal transduction"/>
    <property type="evidence" value="ECO:0000250"/>
    <property type="project" value="ARUK-UCL"/>
</dbReference>
<dbReference type="GO" id="GO:0018108">
    <property type="term" value="P:peptidyl-tyrosine phosphorylation"/>
    <property type="evidence" value="ECO:0000314"/>
    <property type="project" value="UniProtKB"/>
</dbReference>
<dbReference type="GO" id="GO:0007200">
    <property type="term" value="P:phospholipase C-activating G protein-coupled receptor signaling pathway"/>
    <property type="evidence" value="ECO:0000315"/>
    <property type="project" value="MGI"/>
</dbReference>
<dbReference type="GO" id="GO:0007204">
    <property type="term" value="P:positive regulation of cytosolic calcium ion concentration"/>
    <property type="evidence" value="ECO:0000315"/>
    <property type="project" value="MGI"/>
</dbReference>
<dbReference type="GO" id="GO:1903905">
    <property type="term" value="P:positive regulation of establishment of T cell polarity"/>
    <property type="evidence" value="ECO:0000250"/>
    <property type="project" value="UniProtKB"/>
</dbReference>
<dbReference type="GO" id="GO:0010976">
    <property type="term" value="P:positive regulation of neuron projection development"/>
    <property type="evidence" value="ECO:0000315"/>
    <property type="project" value="BHF-UCL"/>
</dbReference>
<dbReference type="GO" id="GO:2000406">
    <property type="term" value="P:positive regulation of T cell migration"/>
    <property type="evidence" value="ECO:0000250"/>
    <property type="project" value="UniProtKB"/>
</dbReference>
<dbReference type="GO" id="GO:0036211">
    <property type="term" value="P:protein modification process"/>
    <property type="evidence" value="ECO:0000304"/>
    <property type="project" value="ProtInc"/>
</dbReference>
<dbReference type="GO" id="GO:0032956">
    <property type="term" value="P:regulation of actin cytoskeleton organization"/>
    <property type="evidence" value="ECO:0000304"/>
    <property type="project" value="UniProtKB"/>
</dbReference>
<dbReference type="GO" id="GO:0010506">
    <property type="term" value="P:regulation of autophagy"/>
    <property type="evidence" value="ECO:0000304"/>
    <property type="project" value="UniProtKB"/>
</dbReference>
<dbReference type="GO" id="GO:0030155">
    <property type="term" value="P:regulation of cell adhesion"/>
    <property type="evidence" value="ECO:0000304"/>
    <property type="project" value="UniProtKB"/>
</dbReference>
<dbReference type="GO" id="GO:2000145">
    <property type="term" value="P:regulation of cell motility"/>
    <property type="evidence" value="ECO:0000304"/>
    <property type="project" value="UniProtKB"/>
</dbReference>
<dbReference type="GO" id="GO:0030100">
    <property type="term" value="P:regulation of endocytosis"/>
    <property type="evidence" value="ECO:0000304"/>
    <property type="project" value="UniProtKB"/>
</dbReference>
<dbReference type="GO" id="GO:0007165">
    <property type="term" value="P:signal transduction"/>
    <property type="evidence" value="ECO:0000304"/>
    <property type="project" value="ProtInc"/>
</dbReference>
<dbReference type="CDD" id="cd05052">
    <property type="entry name" value="PTKc_Abl"/>
    <property type="match status" value="1"/>
</dbReference>
<dbReference type="CDD" id="cd09935">
    <property type="entry name" value="SH2_ABL"/>
    <property type="match status" value="1"/>
</dbReference>
<dbReference type="CDD" id="cd11850">
    <property type="entry name" value="SH3_Abl"/>
    <property type="match status" value="1"/>
</dbReference>
<dbReference type="FunFam" id="1.10.510.10:FF:000070">
    <property type="entry name" value="Tyrosine-protein kinase"/>
    <property type="match status" value="1"/>
</dbReference>
<dbReference type="FunFam" id="1.20.120.330:FF:000003">
    <property type="entry name" value="Tyrosine-protein kinase"/>
    <property type="match status" value="1"/>
</dbReference>
<dbReference type="FunFam" id="2.30.30.40:FF:000010">
    <property type="entry name" value="Tyrosine-protein kinase"/>
    <property type="match status" value="1"/>
</dbReference>
<dbReference type="FunFam" id="3.30.200.20:FF:000037">
    <property type="entry name" value="Tyrosine-protein kinase"/>
    <property type="match status" value="1"/>
</dbReference>
<dbReference type="FunFam" id="3.30.505.10:FF:000004">
    <property type="entry name" value="Tyrosine-protein kinase"/>
    <property type="match status" value="1"/>
</dbReference>
<dbReference type="Gene3D" id="1.20.120.330">
    <property type="entry name" value="Nucleotidyltransferases domain 2"/>
    <property type="match status" value="1"/>
</dbReference>
<dbReference type="Gene3D" id="3.30.200.20">
    <property type="entry name" value="Phosphorylase Kinase, domain 1"/>
    <property type="match status" value="1"/>
</dbReference>
<dbReference type="Gene3D" id="3.30.505.10">
    <property type="entry name" value="SH2 domain"/>
    <property type="match status" value="1"/>
</dbReference>
<dbReference type="Gene3D" id="2.30.30.40">
    <property type="entry name" value="SH3 Domains"/>
    <property type="match status" value="1"/>
</dbReference>
<dbReference type="Gene3D" id="1.10.510.10">
    <property type="entry name" value="Transferase(Phosphotransferase) domain 1"/>
    <property type="match status" value="1"/>
</dbReference>
<dbReference type="InterPro" id="IPR035837">
    <property type="entry name" value="ABL_SH2"/>
</dbReference>
<dbReference type="InterPro" id="IPR015015">
    <property type="entry name" value="F-actin-binding"/>
</dbReference>
<dbReference type="InterPro" id="IPR011009">
    <property type="entry name" value="Kinase-like_dom_sf"/>
</dbReference>
<dbReference type="InterPro" id="IPR050198">
    <property type="entry name" value="Non-receptor_tyrosine_kinases"/>
</dbReference>
<dbReference type="InterPro" id="IPR000719">
    <property type="entry name" value="Prot_kinase_dom"/>
</dbReference>
<dbReference type="InterPro" id="IPR017441">
    <property type="entry name" value="Protein_kinase_ATP_BS"/>
</dbReference>
<dbReference type="InterPro" id="IPR001245">
    <property type="entry name" value="Ser-Thr/Tyr_kinase_cat_dom"/>
</dbReference>
<dbReference type="InterPro" id="IPR000980">
    <property type="entry name" value="SH2"/>
</dbReference>
<dbReference type="InterPro" id="IPR036860">
    <property type="entry name" value="SH2_dom_sf"/>
</dbReference>
<dbReference type="InterPro" id="IPR036028">
    <property type="entry name" value="SH3-like_dom_sf"/>
</dbReference>
<dbReference type="InterPro" id="IPR001452">
    <property type="entry name" value="SH3_domain"/>
</dbReference>
<dbReference type="InterPro" id="IPR008266">
    <property type="entry name" value="Tyr_kinase_AS"/>
</dbReference>
<dbReference type="InterPro" id="IPR020635">
    <property type="entry name" value="Tyr_kinase_cat_dom"/>
</dbReference>
<dbReference type="PANTHER" id="PTHR24418">
    <property type="entry name" value="TYROSINE-PROTEIN KINASE"/>
    <property type="match status" value="1"/>
</dbReference>
<dbReference type="Pfam" id="PF08919">
    <property type="entry name" value="F_actin_bind"/>
    <property type="match status" value="1"/>
</dbReference>
<dbReference type="Pfam" id="PF07714">
    <property type="entry name" value="PK_Tyr_Ser-Thr"/>
    <property type="match status" value="1"/>
</dbReference>
<dbReference type="Pfam" id="PF00017">
    <property type="entry name" value="SH2"/>
    <property type="match status" value="1"/>
</dbReference>
<dbReference type="Pfam" id="PF00018">
    <property type="entry name" value="SH3_1"/>
    <property type="match status" value="1"/>
</dbReference>
<dbReference type="PRINTS" id="PR00401">
    <property type="entry name" value="SH2DOMAIN"/>
</dbReference>
<dbReference type="PRINTS" id="PR00109">
    <property type="entry name" value="TYRKINASE"/>
</dbReference>
<dbReference type="SMART" id="SM00808">
    <property type="entry name" value="FABD"/>
    <property type="match status" value="1"/>
</dbReference>
<dbReference type="SMART" id="SM00252">
    <property type="entry name" value="SH2"/>
    <property type="match status" value="1"/>
</dbReference>
<dbReference type="SMART" id="SM00326">
    <property type="entry name" value="SH3"/>
    <property type="match status" value="1"/>
</dbReference>
<dbReference type="SMART" id="SM00219">
    <property type="entry name" value="TyrKc"/>
    <property type="match status" value="1"/>
</dbReference>
<dbReference type="SUPFAM" id="SSF56112">
    <property type="entry name" value="Protein kinase-like (PK-like)"/>
    <property type="match status" value="1"/>
</dbReference>
<dbReference type="SUPFAM" id="SSF55550">
    <property type="entry name" value="SH2 domain"/>
    <property type="match status" value="1"/>
</dbReference>
<dbReference type="SUPFAM" id="SSF50044">
    <property type="entry name" value="SH3-domain"/>
    <property type="match status" value="1"/>
</dbReference>
<dbReference type="PROSITE" id="PS00107">
    <property type="entry name" value="PROTEIN_KINASE_ATP"/>
    <property type="match status" value="1"/>
</dbReference>
<dbReference type="PROSITE" id="PS50011">
    <property type="entry name" value="PROTEIN_KINASE_DOM"/>
    <property type="match status" value="1"/>
</dbReference>
<dbReference type="PROSITE" id="PS00109">
    <property type="entry name" value="PROTEIN_KINASE_TYR"/>
    <property type="match status" value="1"/>
</dbReference>
<dbReference type="PROSITE" id="PS50001">
    <property type="entry name" value="SH2"/>
    <property type="match status" value="1"/>
</dbReference>
<dbReference type="PROSITE" id="PS50002">
    <property type="entry name" value="SH3"/>
    <property type="match status" value="1"/>
</dbReference>
<feature type="initiator methionine" description="Removed">
    <location>
        <position position="1"/>
    </location>
</feature>
<feature type="chain" id="PRO_0000088052" description="Tyrosine-protein kinase ABL2">
    <location>
        <begin position="2"/>
        <end position="1182"/>
    </location>
</feature>
<feature type="domain" description="SH3" evidence="7">
    <location>
        <begin position="107"/>
        <end position="167"/>
    </location>
</feature>
<feature type="domain" description="SH2" evidence="6">
    <location>
        <begin position="173"/>
        <end position="263"/>
    </location>
</feature>
<feature type="domain" description="Protein kinase" evidence="5">
    <location>
        <begin position="288"/>
        <end position="539"/>
    </location>
</feature>
<feature type="region of interest" description="Disordered" evidence="9">
    <location>
        <begin position="1"/>
        <end position="47"/>
    </location>
</feature>
<feature type="region of interest" description="CAP">
    <location>
        <begin position="2"/>
        <end position="106"/>
    </location>
</feature>
<feature type="region of interest" description="Disordered" evidence="9">
    <location>
        <begin position="60"/>
        <end position="80"/>
    </location>
</feature>
<feature type="region of interest" description="Disordered" evidence="9">
    <location>
        <begin position="611"/>
        <end position="641"/>
    </location>
</feature>
<feature type="region of interest" description="Disordered" evidence="9">
    <location>
        <begin position="654"/>
        <end position="674"/>
    </location>
</feature>
<feature type="region of interest" description="F-actin-binding" evidence="1">
    <location>
        <begin position="694"/>
        <end position="930"/>
    </location>
</feature>
<feature type="region of interest" description="Disordered" evidence="9">
    <location>
        <begin position="763"/>
        <end position="794"/>
    </location>
</feature>
<feature type="region of interest" description="Disordered" evidence="9">
    <location>
        <begin position="807"/>
        <end position="851"/>
    </location>
</feature>
<feature type="region of interest" description="Disordered" evidence="9">
    <location>
        <begin position="964"/>
        <end position="1024"/>
    </location>
</feature>
<feature type="region of interest" description="F-actin-binding" evidence="1">
    <location>
        <begin position="1020"/>
        <end position="1182"/>
    </location>
</feature>
<feature type="short sequence motif" description="Kinase activation loop" evidence="1">
    <location>
        <begin position="427"/>
        <end position="451"/>
    </location>
</feature>
<feature type="short sequence motif" description="Nuclear localization signal" evidence="4">
    <location>
        <begin position="658"/>
        <end position="660"/>
    </location>
</feature>
<feature type="compositionally biased region" description="Low complexity" evidence="9">
    <location>
        <begin position="20"/>
        <end position="30"/>
    </location>
</feature>
<feature type="compositionally biased region" description="Polar residues" evidence="9">
    <location>
        <begin position="780"/>
        <end position="791"/>
    </location>
</feature>
<feature type="compositionally biased region" description="Polar residues" evidence="9">
    <location>
        <begin position="807"/>
        <end position="823"/>
    </location>
</feature>
<feature type="compositionally biased region" description="Basic and acidic residues" evidence="9">
    <location>
        <begin position="825"/>
        <end position="849"/>
    </location>
</feature>
<feature type="compositionally biased region" description="Polar residues" evidence="9">
    <location>
        <begin position="1010"/>
        <end position="1019"/>
    </location>
</feature>
<feature type="active site" description="Proton acceptor" evidence="5 8">
    <location>
        <position position="409"/>
    </location>
</feature>
<feature type="binding site" evidence="5">
    <location>
        <begin position="294"/>
        <end position="302"/>
    </location>
    <ligand>
        <name>ATP</name>
        <dbReference type="ChEBI" id="CHEBI:30616"/>
    </ligand>
</feature>
<feature type="binding site" evidence="5">
    <location>
        <position position="317"/>
    </location>
    <ligand>
        <name>ATP</name>
        <dbReference type="ChEBI" id="CHEBI:30616"/>
    </ligand>
</feature>
<feature type="binding site" evidence="5">
    <location>
        <begin position="362"/>
        <end position="368"/>
    </location>
    <ligand>
        <name>ATP</name>
        <dbReference type="ChEBI" id="CHEBI:30616"/>
    </ligand>
</feature>
<feature type="modified residue" description="Phosphoserine" evidence="2">
    <location>
        <position position="97"/>
    </location>
</feature>
<feature type="modified residue" description="Phosphotyrosine" evidence="2">
    <location>
        <position position="116"/>
    </location>
</feature>
<feature type="modified residue" description="Phosphotyrosine" evidence="2">
    <location>
        <position position="161"/>
    </location>
</feature>
<feature type="modified residue" description="Phosphotyrosine" evidence="2">
    <location>
        <position position="174"/>
    </location>
</feature>
<feature type="modified residue" description="Phosphotyrosine" evidence="2">
    <location>
        <position position="185"/>
    </location>
</feature>
<feature type="modified residue" description="Phosphotyrosine" evidence="2">
    <location>
        <position position="218"/>
    </location>
</feature>
<feature type="modified residue" description="Phosphotyrosine" evidence="2">
    <location>
        <position position="231"/>
    </location>
</feature>
<feature type="modified residue" description="Phosphotyrosine; by ABL1 and autocatalysis" evidence="11">
    <location>
        <position position="261"/>
    </location>
</feature>
<feature type="modified residue" description="Phosphotyrosine; by autocatalysis" evidence="10">
    <location>
        <position position="272"/>
    </location>
</feature>
<feature type="modified residue" description="Phosphoserine" evidence="29">
    <location>
        <position position="275"/>
    </location>
</feature>
<feature type="modified residue" description="Phosphotyrosine" evidence="2">
    <location>
        <position position="299"/>
    </location>
</feature>
<feature type="modified residue" description="Phosphotyrosine" evidence="2">
    <location>
        <position position="303"/>
    </location>
</feature>
<feature type="modified residue" description="Phosphotyrosine; by autocatalysis and SRC-type Tyr-kinases" evidence="10">
    <location>
        <position position="439"/>
    </location>
</feature>
<feature type="modified residue" description="Phosphotyrosine" evidence="2">
    <location>
        <position position="459"/>
    </location>
</feature>
<feature type="modified residue" description="Phosphotyrosine; by autocatalysis" evidence="10">
    <location>
        <position position="568"/>
    </location>
</feature>
<feature type="modified residue" description="Phosphoserine" evidence="28 34 35">
    <location>
        <position position="620"/>
    </location>
</feature>
<feature type="modified residue" description="Phosphoserine" evidence="28 32 33 34 35">
    <location>
        <position position="631"/>
    </location>
</feature>
<feature type="modified residue" description="Phosphoserine" evidence="28">
    <location>
        <position position="633"/>
    </location>
</feature>
<feature type="modified residue" description="Phosphoserine" evidence="28 34">
    <location>
        <position position="655"/>
    </location>
</feature>
<feature type="modified residue" description="Phosphoserine" evidence="2">
    <location>
        <position position="669"/>
    </location>
</feature>
<feature type="modified residue" description="Phosphoserine" evidence="2">
    <location>
        <position position="670"/>
    </location>
</feature>
<feature type="modified residue" description="Phosphoserine" evidence="34">
    <location>
        <position position="671"/>
    </location>
</feature>
<feature type="modified residue" description="Phosphotyrosine; by autocatalysis" evidence="10">
    <location>
        <position position="683"/>
    </location>
</feature>
<feature type="modified residue" description="Phosphotyrosine" evidence="30">
    <location>
        <position position="718"/>
    </location>
</feature>
<feature type="modified residue" description="N6-acetyllysine" evidence="2">
    <location>
        <position position="776"/>
    </location>
</feature>
<feature type="modified residue" description="Phosphoserine" evidence="34">
    <location>
        <position position="783"/>
    </location>
</feature>
<feature type="modified residue" description="Phosphothreonine" evidence="2">
    <location>
        <position position="800"/>
    </location>
</feature>
<feature type="modified residue" description="Phosphoserine" evidence="27 28 34">
    <location>
        <position position="817"/>
    </location>
</feature>
<feature type="modified residue" description="Phosphoserine" evidence="28 31 34">
    <location>
        <position position="820"/>
    </location>
</feature>
<feature type="modified residue" description="Phosphoserine" evidence="29">
    <location>
        <position position="915"/>
    </location>
</feature>
<feature type="modified residue" description="Phosphoserine" evidence="28 31 32 34">
    <location>
        <position position="936"/>
    </location>
</feature>
<feature type="lipid moiety-binding region" description="N-myristoyl glycine" evidence="1">
    <location>
        <position position="2"/>
    </location>
</feature>
<feature type="splice variant" id="VSP_004961" description="In isoform 2 and isoform 4." evidence="23 24">
    <original>MGQQVGRVGEAPGLQQPQPRGIRGSSAARPSGRRRDPAGRTTETGFNIFTQHDHFASCVEDGFEGDKTGGSSP</original>
    <variation>MVLGTVLLPPNSYGRDQDTSLCCLCTEASESALPDLT</variation>
    <location>
        <begin position="1"/>
        <end position="73"/>
    </location>
</feature>
<feature type="splice variant" id="VSP_017112" description="In isoform 3 and isoform 10." evidence="22">
    <original>MGQQVGRVGEAPGLQQPQPRGIRGSSAARPSGRRRDPAGRTTETGFNIFTQH</original>
    <variation>MVLGTVLLPPNSYGRDQDTSLCCLCTEASESALPDLT</variation>
    <location>
        <begin position="1"/>
        <end position="52"/>
    </location>
</feature>
<feature type="splice variant" id="VSP_041772" description="In isoform 6, isoform 7 and isoform 8." evidence="21 24">
    <location>
        <begin position="53"/>
        <end position="73"/>
    </location>
</feature>
<feature type="splice variant" id="VSP_041773" description="In isoform 8." evidence="21">
    <original>EEVAEELGRAASSSS</original>
    <variation>EVLLHCANQTCITL</variation>
    <location>
        <begin position="550"/>
        <end position="564"/>
    </location>
</feature>
<feature type="splice variant" id="VSP_041774" description="In isoform 8." evidence="21">
    <location>
        <begin position="565"/>
        <end position="1182"/>
    </location>
</feature>
<feature type="splice variant" id="VSP_021308" description="In isoform 4, isoform 5, isoform 7 and isoform 10." evidence="23 24">
    <location>
        <begin position="688"/>
        <end position="790"/>
    </location>
</feature>
<feature type="sequence variant" id="VAR_055411" description="In dbSNP:rs55655202." evidence="15">
    <original>R</original>
    <variation>H</variation>
    <location>
        <position position="78"/>
    </location>
</feature>
<feature type="sequence variant" id="VAR_055412" description="Somatic mutation in a breast cancer sample." evidence="15">
    <original>E</original>
    <variation>Q</variation>
    <location>
        <position position="99"/>
    </location>
</feature>
<feature type="sequence variant" id="VAR_055413" description="Somatic mutation in a lung squamous cell carcinoma." evidence="15">
    <original>R</original>
    <variation>I</variation>
    <location>
        <position position="519"/>
    </location>
</feature>
<feature type="sequence variant" id="VAR_055414" description="In dbSNP:rs55892721." evidence="15">
    <original>T</original>
    <variation>S</variation>
    <location>
        <position position="769"/>
    </location>
</feature>
<feature type="sequence variant" id="VAR_029232" description="In dbSNP:rs17277288." evidence="15 20">
    <original>K</original>
    <variation>R</variation>
    <location>
        <position position="930"/>
    </location>
</feature>
<feature type="sequence variant" id="VAR_029233" description="In dbSNP:rs28913889." evidence="20">
    <original>V</original>
    <variation>M</variation>
    <location>
        <position position="946"/>
    </location>
</feature>
<feature type="sequence variant" id="VAR_029234" description="In dbSNP:rs28913890." evidence="15 20">
    <original>P</original>
    <variation>R</variation>
    <location>
        <position position="996"/>
    </location>
</feature>
<feature type="sequence variant" id="VAR_029235" description="In dbSNP:rs28913891." evidence="20">
    <original>S</original>
    <variation>N</variation>
    <location>
        <position position="1085"/>
    </location>
</feature>
<feature type="sequence variant" id="VAR_029236" description="In dbSNP:rs28913892." evidence="20">
    <original>T</original>
    <variation>A</variation>
    <location>
        <position position="1101"/>
    </location>
</feature>
<feature type="sequence conflict" description="In Ref. 9; no nucleotide entry." evidence="25" ref="9">
    <original>NL</original>
    <variation>TI</variation>
    <location>
        <begin position="343"/>
        <end position="344"/>
    </location>
</feature>
<feature type="sequence conflict" description="In Ref. 3; AK311045." evidence="25" ref="3">
    <original>T</original>
    <variation>I</variation>
    <location>
        <position position="435"/>
    </location>
</feature>
<feature type="sequence conflict" description="In Ref. 4; CAD98092." evidence="25" ref="4">
    <original>K</original>
    <variation>R</variation>
    <location>
        <position position="981"/>
    </location>
</feature>
<feature type="strand" evidence="42">
    <location>
        <begin position="111"/>
        <end position="116"/>
    </location>
</feature>
<feature type="strand" evidence="42">
    <location>
        <begin position="133"/>
        <end position="139"/>
    </location>
</feature>
<feature type="strand" evidence="42">
    <location>
        <begin position="141"/>
        <end position="150"/>
    </location>
</feature>
<feature type="strand" evidence="42">
    <location>
        <begin position="153"/>
        <end position="158"/>
    </location>
</feature>
<feature type="helix" evidence="42">
    <location>
        <begin position="159"/>
        <end position="161"/>
    </location>
</feature>
<feature type="strand" evidence="42">
    <location>
        <begin position="162"/>
        <end position="164"/>
    </location>
</feature>
<feature type="helix" evidence="41">
    <location>
        <begin position="168"/>
        <end position="170"/>
    </location>
</feature>
<feature type="strand" evidence="41">
    <location>
        <begin position="174"/>
        <end position="177"/>
    </location>
</feature>
<feature type="helix" evidence="41">
    <location>
        <begin position="180"/>
        <end position="187"/>
    </location>
</feature>
<feature type="strand" evidence="41">
    <location>
        <begin position="194"/>
        <end position="199"/>
    </location>
</feature>
<feature type="strand" evidence="41">
    <location>
        <begin position="207"/>
        <end position="213"/>
    </location>
</feature>
<feature type="strand" evidence="41">
    <location>
        <begin position="216"/>
        <end position="221"/>
    </location>
</feature>
<feature type="strand" evidence="36">
    <location>
        <begin position="226"/>
        <end position="228"/>
    </location>
</feature>
<feature type="strand" evidence="41">
    <location>
        <begin position="230"/>
        <end position="233"/>
    </location>
</feature>
<feature type="strand" evidence="41">
    <location>
        <begin position="236"/>
        <end position="240"/>
    </location>
</feature>
<feature type="helix" evidence="41">
    <location>
        <begin position="241"/>
        <end position="248"/>
    </location>
</feature>
<feature type="strand" evidence="41">
    <location>
        <begin position="255"/>
        <end position="257"/>
    </location>
</feature>
<feature type="strand" evidence="39">
    <location>
        <begin position="280"/>
        <end position="282"/>
    </location>
</feature>
<feature type="helix" evidence="40">
    <location>
        <begin position="285"/>
        <end position="287"/>
    </location>
</feature>
<feature type="strand" evidence="40">
    <location>
        <begin position="288"/>
        <end position="293"/>
    </location>
</feature>
<feature type="helix" evidence="40">
    <location>
        <begin position="294"/>
        <end position="297"/>
    </location>
</feature>
<feature type="strand" evidence="40">
    <location>
        <begin position="300"/>
        <end position="307"/>
    </location>
</feature>
<feature type="helix" evidence="40">
    <location>
        <begin position="308"/>
        <end position="310"/>
    </location>
</feature>
<feature type="strand" evidence="40">
    <location>
        <begin position="312"/>
        <end position="318"/>
    </location>
</feature>
<feature type="helix" evidence="40">
    <location>
        <begin position="326"/>
        <end position="337"/>
    </location>
</feature>
<feature type="strand" evidence="40">
    <location>
        <begin position="347"/>
        <end position="351"/>
    </location>
</feature>
<feature type="strand" evidence="40">
    <location>
        <begin position="353"/>
        <end position="356"/>
    </location>
</feature>
<feature type="strand" evidence="40">
    <location>
        <begin position="358"/>
        <end position="362"/>
    </location>
</feature>
<feature type="helix" evidence="40">
    <location>
        <begin position="369"/>
        <end position="375"/>
    </location>
</feature>
<feature type="turn" evidence="40">
    <location>
        <begin position="378"/>
        <end position="380"/>
    </location>
</feature>
<feature type="helix" evidence="40">
    <location>
        <begin position="383"/>
        <end position="402"/>
    </location>
</feature>
<feature type="helix" evidence="40">
    <location>
        <begin position="412"/>
        <end position="414"/>
    </location>
</feature>
<feature type="strand" evidence="40">
    <location>
        <begin position="415"/>
        <end position="417"/>
    </location>
</feature>
<feature type="helix" evidence="40">
    <location>
        <begin position="419"/>
        <end position="421"/>
    </location>
</feature>
<feature type="strand" evidence="40">
    <location>
        <begin position="423"/>
        <end position="425"/>
    </location>
</feature>
<feature type="strand" evidence="38">
    <location>
        <begin position="435"/>
        <end position="437"/>
    </location>
</feature>
<feature type="strand" evidence="39">
    <location>
        <begin position="438"/>
        <end position="440"/>
    </location>
</feature>
<feature type="helix" evidence="40">
    <location>
        <begin position="449"/>
        <end position="451"/>
    </location>
</feature>
<feature type="helix" evidence="40">
    <location>
        <begin position="454"/>
        <end position="459"/>
    </location>
</feature>
<feature type="helix" evidence="40">
    <location>
        <begin position="464"/>
        <end position="479"/>
    </location>
</feature>
<feature type="helix" evidence="40">
    <location>
        <begin position="491"/>
        <end position="493"/>
    </location>
</feature>
<feature type="helix" evidence="40">
    <location>
        <begin position="494"/>
        <end position="499"/>
    </location>
</feature>
<feature type="helix" evidence="40">
    <location>
        <begin position="512"/>
        <end position="521"/>
    </location>
</feature>
<feature type="helix" evidence="40">
    <location>
        <begin position="526"/>
        <end position="528"/>
    </location>
</feature>
<feature type="helix" evidence="40">
    <location>
        <begin position="532"/>
        <end position="545"/>
    </location>
</feature>
<feature type="helix" evidence="37">
    <location>
        <begin position="1069"/>
        <end position="1071"/>
    </location>
</feature>
<feature type="turn" evidence="37">
    <location>
        <begin position="1076"/>
        <end position="1078"/>
    </location>
</feature>
<feature type="helix" evidence="37">
    <location>
        <begin position="1080"/>
        <end position="1083"/>
    </location>
</feature>
<feature type="helix" evidence="37">
    <location>
        <begin position="1086"/>
        <end position="1099"/>
    </location>
</feature>
<feature type="helix" evidence="37">
    <location>
        <begin position="1106"/>
        <end position="1123"/>
    </location>
</feature>
<feature type="helix" evidence="37">
    <location>
        <begin position="1124"/>
        <end position="1126"/>
    </location>
</feature>
<feature type="helix" evidence="37">
    <location>
        <begin position="1130"/>
        <end position="1152"/>
    </location>
</feature>
<feature type="strand" evidence="37">
    <location>
        <begin position="1155"/>
        <end position="1158"/>
    </location>
</feature>
<feature type="helix" evidence="37">
    <location>
        <begin position="1165"/>
        <end position="1181"/>
    </location>
</feature>
<feature type="modified residue" description="Phosphotyrosine" evidence="30">
    <location sequence="P42684-4">
        <position position="647"/>
    </location>
</feature>
<feature type="sequence variant" id="VAR_082895" description="In dbSNP:rs1318056." evidence="16 26">
    <original>S</original>
    <variation>T</variation>
    <location sequence="P42684-4">
        <position position="12"/>
    </location>
</feature>
<feature type="modified residue" description="Phosphotyrosine" evidence="30">
    <location sequence="P42684-5">
        <position position="683"/>
    </location>
</feature>
<feature type="modified residue" description="Phosphotyrosine" evidence="30">
    <location sequence="P42684-7">
        <position position="662"/>
    </location>
</feature>
<feature type="modified residue" description="Phosphotyrosine" evidence="30">
    <location sequence="P42684-10">
        <position position="668"/>
    </location>
</feature>
<gene>
    <name type="primary">ABL2</name>
    <name type="synonym">ABLL</name>
    <name type="synonym">ARG</name>
</gene>
<organism>
    <name type="scientific">Homo sapiens</name>
    <name type="common">Human</name>
    <dbReference type="NCBI Taxonomy" id="9606"/>
    <lineage>
        <taxon>Eukaryota</taxon>
        <taxon>Metazoa</taxon>
        <taxon>Chordata</taxon>
        <taxon>Craniata</taxon>
        <taxon>Vertebrata</taxon>
        <taxon>Euteleostomi</taxon>
        <taxon>Mammalia</taxon>
        <taxon>Eutheria</taxon>
        <taxon>Euarchontoglires</taxon>
        <taxon>Primates</taxon>
        <taxon>Haplorrhini</taxon>
        <taxon>Catarrhini</taxon>
        <taxon>Hominidae</taxon>
        <taxon>Homo</taxon>
    </lineage>
</organism>
<accession>P42684</accession>
<accession>A0M8X0</accession>
<accession>B7UEF2</accession>
<accession>B7UEF3</accession>
<accession>B7UEF4</accession>
<accession>B7UEF5</accession>
<accession>Q5T0X6</accession>
<accession>Q5W0C5</accession>
<accession>Q6NZY6</accession>
<accession>Q7Z301</accession>
<sequence>MGQQVGRVGEAPGLQQPQPRGIRGSSAARPSGRRRDPAGRTTETGFNIFTQHDHFASCVEDGFEGDKTGGSSPEALHRPYGCDVEPQALNEAIRWSSKENLLGATESDPNLFVALYDFVASGDNTLSITKGEKLRVLGYNQNGEWSEVRSKNGQGWVPSNYITPVNSLEKHSWYHGPVSRSAAEYLLSSLINGSFLVRESESSPGQLSISLRYEGRVYHYRINTTADGKVYVTAESRFSTLAELVHHHSTVADGLVTTLHYPAPKCNKPTVYGVSPIHDKWEMERTDITMKHKLGGGQYGEVYVGVWKKYSLTVAVKTLKEDTMEVEEFLKEAAVMKEIKHPNLVQLLGVCTLEPPFYIVTEYMPYGNLLDYLRECNREEVTAVVLLYMATQISSAMEYLEKKNFIHRDLAARNCLVGENHVVKVADFGLSRLMTGDTYTAHAGAKFPIKWTAPESLAYNTFSIKSDVWAFGVLLWEIATYGMSPYPGIDLSQVYDLLEKGYRMEQPEGCPPKVYELMRACWKWSPADRPSFAETHQAFETMFHDSSISEEVAEELGRAASSSSVVPYLPRLPILPSKTRTLKKQVENKENIEGAQDATENSASSLAPGFIRGAQASSGSPALPRKQRDKSPSSLLEDAKETCFTRDRKGGFFSSFMKKRNAPTPPKRSSSFREMENQPHKKYELTGNFSSVASLQHADGFSFTPAQQEANLVPPKCYGGSFAQRNLCNDDGGGGGGSGTAGGGWSGITGFFTPRLIKKTLGLRAGKPTASDDTSKPFPRSNSTSSMSSGLPEQDRMAMTLPRNCQRSKLQLERTVSTSSQPEENVDRANDMLPKKSEESAAPSRERPKAKLLPRGATALPLRTPSGDLAITEKDPPGVGVAGVAAAPKGKEKNGGARLGMAGVPEDGEQPGWPSPAKAAPVLPTTHNHKVPVLISPTLKHTPADVQLIGTDSQGNKFKLLSEHQVTSSGDKDRPRRVKPKCAPPPPPVMRLLQHPSICSDPTEEPTALTAGQSTSETQEGGKKAALGAVPISGKAGRPVMPPPQVPLPTSSISPAKMANGTAGTKVALRKTKQAAEKISADKISKEALLECADLLSSALTEPVPNSQLVDTGHQLLDYCSGYVDCIPQTRNKFAFREAVSKLELSLQELQVSSAAAGVPGTNPVLNNLLSCVQEISDVVQR</sequence>
<name>ABL2_HUMAN</name>
<protein>
    <recommendedName>
        <fullName>Tyrosine-protein kinase ABL2</fullName>
        <ecNumber>2.7.10.2</ecNumber>
    </recommendedName>
    <alternativeName>
        <fullName>Abelson murine leukemia viral oncogene homolog 2</fullName>
    </alternativeName>
    <alternativeName>
        <fullName>Abelson tyrosine-protein kinase 2</fullName>
    </alternativeName>
    <alternativeName>
        <fullName>Abelson-related gene protein</fullName>
    </alternativeName>
    <alternativeName>
        <fullName>Tyrosine-protein kinase ARG</fullName>
    </alternativeName>
</protein>
<comment type="function">
    <text evidence="3 11 12 13 14 17">Non-receptor tyrosine-protein kinase that plays an ABL1-overlapping role in key processes linked to cell growth and survival such as cytoskeleton remodeling in response to extracellular stimuli, cell motility and adhesion and receptor endocytosis. Coordinates actin remodeling through tyrosine phosphorylation of proteins controlling cytoskeleton dynamics like MYH10 (involved in movement); CTTN (involved in signaling); or TUBA1 and TUBB (microtubule subunits). Binds directly F-actin and regulates actin cytoskeletal structure through its F-actin-bundling activity. Involved in the regulation of cell adhesion and motility through phosphorylation of key regulators of these processes such as CRK, CRKL, DOK1 or ARHGAP35. Adhesion-dependent phosphorylation of ARHGAP35 promotes its association with RASA1, resulting in recruitment of ARHGAP35 to the cell periphery where it inhibits RHO. Phosphorylates multiple receptor tyrosine kinases like PDGFRB and other substrates which are involved in endocytosis regulation such as RIN1. In brain, may regulate neurotransmission by phosphorylating proteins at the synapse. ABL2 also acts as a regulator of multiple pathological signaling cascades during infection. Pathogens can highjack ABL2 kinase signaling to reorganize the host actin cytoskeleton for multiple purposes, like facilitating intracellular movement and host cell exit. Finally, functions as its own regulator through autocatalytic activity as well as through phosphorylation of its inhibitor, ABI1. Positively regulates chemokine-mediated T-cell migration, polarization, and homing to lymph nodes and immune-challenged tissues, potentially via activation of NEDD9/HEF1 and RAP1 (By similarity).</text>
</comment>
<comment type="catalytic activity">
    <reaction evidence="8">
        <text>L-tyrosyl-[protein] + ATP = O-phospho-L-tyrosyl-[protein] + ADP + H(+)</text>
        <dbReference type="Rhea" id="RHEA:10596"/>
        <dbReference type="Rhea" id="RHEA-COMP:10136"/>
        <dbReference type="Rhea" id="RHEA-COMP:20101"/>
        <dbReference type="ChEBI" id="CHEBI:15378"/>
        <dbReference type="ChEBI" id="CHEBI:30616"/>
        <dbReference type="ChEBI" id="CHEBI:46858"/>
        <dbReference type="ChEBI" id="CHEBI:61978"/>
        <dbReference type="ChEBI" id="CHEBI:456216"/>
        <dbReference type="EC" id="2.7.10.2"/>
    </reaction>
</comment>
<comment type="cofactor">
    <cofactor>
        <name>Mg(2+)</name>
        <dbReference type="ChEBI" id="CHEBI:18420"/>
    </cofactor>
    <cofactor>
        <name>Mn(2+)</name>
        <dbReference type="ChEBI" id="CHEBI:29035"/>
    </cofactor>
</comment>
<comment type="activity regulation">
    <text evidence="1">Stabilized in the inactive form by an association between the SH3 domain and the SH2-TK linker region, interactions of the N-terminal cap, and contributions from an N-terminal myristoyl group and phospholipids. Activated by autophosphorylation as well as by SRC-family kinase-mediated phosphorylation. Activated by RIN1 binding to the SH2 and SH3 domains. Inhibited by imatinib mesylate (Gleevec) which is used for the treatment of chronic myeloid leukemia (CML). Phosphatidylinositol 4,5-bisphosphate (PIP2), a highly abundant phosphoinositide known to regulate cytoskeletal and membrane proteins, inhibits the tyrosine kinase activity (By similarity).</text>
</comment>
<comment type="subunit">
    <text evidence="12 13 18 19">Interacts with PSMA7. Interacts with CTTN. Found in a complex with ABL1, ABL2, CRK and UNC119; leading to the inhibition of CRK phosphorylation by ABL kinases.</text>
</comment>
<comment type="interaction">
    <interactant intactId="EBI-1102694">
        <id>P42684</id>
    </interactant>
    <interactant intactId="EBI-375446">
        <id>Q8IZP0</id>
        <label>ABI1</label>
    </interactant>
    <organismsDiffer>false</organismsDiffer>
    <experiments>2</experiments>
</comment>
<comment type="interaction">
    <interactant intactId="EBI-1102694">
        <id>P42684</id>
    </interactant>
    <interactant intactId="EBI-886">
        <id>P46108</id>
        <label>CRK</label>
    </interactant>
    <organismsDiffer>false</organismsDiffer>
    <experiments>6</experiments>
</comment>
<comment type="interaction">
    <interactant intactId="EBI-1102694">
        <id>P42684</id>
    </interactant>
    <interactant intactId="EBI-297353">
        <id>P00533</id>
        <label>EGFR</label>
    </interactant>
    <organismsDiffer>false</organismsDiffer>
    <experiments>9</experiments>
</comment>
<comment type="interaction">
    <interactant intactId="EBI-1102694">
        <id>P42684</id>
    </interactant>
    <interactant intactId="EBI-641062">
        <id>P04626</id>
        <label>ERBB2</label>
    </interactant>
    <organismsDiffer>false</organismsDiffer>
    <experiments>6</experiments>
</comment>
<comment type="interaction">
    <interactant intactId="EBI-1102694">
        <id>P42684</id>
    </interactant>
    <interactant intactId="EBI-720706">
        <id>P21860</id>
        <label>ERBB3</label>
    </interactant>
    <organismsDiffer>false</organismsDiffer>
    <experiments>10</experiments>
</comment>
<comment type="interaction">
    <interactant intactId="EBI-1102694">
        <id>P42684</id>
    </interactant>
    <interactant intactId="EBI-80371">
        <id>Q15303</id>
        <label>ERBB4</label>
    </interactant>
    <organismsDiffer>false</organismsDiffer>
    <experiments>4</experiments>
</comment>
<comment type="interaction">
    <interactant intactId="EBI-1102694">
        <id>P42684</id>
    </interactant>
    <interactant intactId="EBI-3946257">
        <id>P36888</id>
        <label>FLT3</label>
    </interactant>
    <organismsDiffer>false</organismsDiffer>
    <experiments>3</experiments>
</comment>
<comment type="interaction">
    <interactant intactId="EBI-1102694">
        <id>P42684</id>
    </interactant>
    <interactant intactId="EBI-515315">
        <id>P06241</id>
        <label>FYN</label>
    </interactant>
    <organismsDiffer>false</organismsDiffer>
    <experiments>2</experiments>
</comment>
<comment type="interaction">
    <interactant intactId="EBI-1102694">
        <id>P42684</id>
    </interactant>
    <interactant intactId="EBI-401755">
        <id>P62993</id>
        <label>GRB2</label>
    </interactant>
    <organismsDiffer>false</organismsDiffer>
    <experiments>2</experiments>
</comment>
<comment type="interaction">
    <interactant intactId="EBI-1102694">
        <id>P42684</id>
    </interactant>
    <interactant intactId="EBI-1379503">
        <id>P10721</id>
        <label>KIT</label>
    </interactant>
    <organismsDiffer>false</organismsDiffer>
    <experiments>2</experiments>
</comment>
<comment type="interaction">
    <interactant intactId="EBI-1102694">
        <id>P42684</id>
    </interactant>
    <interactant intactId="EBI-389883">
        <id>P16333</id>
        <label>NCK1</label>
    </interactant>
    <organismsDiffer>false</organismsDiffer>
    <experiments>5</experiments>
</comment>
<comment type="interaction">
    <interactant intactId="EBI-1102694">
        <id>P42684</id>
    </interactant>
    <interactant intactId="EBI-79464">
        <id>P27986</id>
        <label>PIK3R1</label>
    </interactant>
    <organismsDiffer>false</organismsDiffer>
    <experiments>2</experiments>
</comment>
<comment type="interaction">
    <interactant intactId="EBI-1102694">
        <id>P42684</id>
    </interactant>
    <interactant intactId="EBI-79387">
        <id>P19174</id>
        <label>PLCG1</label>
    </interactant>
    <organismsDiffer>false</organismsDiffer>
    <experiments>4</experiments>
</comment>
<comment type="interaction">
    <interactant intactId="EBI-1102694">
        <id>P42684</id>
    </interactant>
    <interactant intactId="EBI-366017">
        <id>Q13671</id>
        <label>RIN1</label>
    </interactant>
    <organismsDiffer>false</organismsDiffer>
    <experiments>6</experiments>
</comment>
<comment type="interaction">
    <interactant intactId="EBI-1102694">
        <id>P42684</id>
    </interactant>
    <interactant intactId="EBI-744603">
        <id>Q15637</id>
        <label>SF1</label>
    </interactant>
    <organismsDiffer>false</organismsDiffer>
    <experiments>3</experiments>
</comment>
<comment type="interaction">
    <interactant intactId="EBI-1102694">
        <id>P42684</id>
    </interactant>
    <interactant intactId="EBI-621482">
        <id>P12931</id>
        <label>SRC</label>
    </interactant>
    <organismsDiffer>false</organismsDiffer>
    <experiments>2</experiments>
</comment>
<comment type="interaction">
    <interactant intactId="EBI-10693977">
        <id>P42684-3</id>
    </interactant>
    <interactant intactId="EBI-11096309">
        <id>Q9NYB9-2</id>
        <label>ABI2</label>
    </interactant>
    <organismsDiffer>false</organismsDiffer>
    <experiments>3</experiments>
</comment>
<comment type="interaction">
    <interactant intactId="EBI-10693977">
        <id>P42684-3</id>
    </interactant>
    <interactant intactId="EBI-6550597">
        <id>Q15642-2</id>
        <label>TRIP10</label>
    </interactant>
    <organismsDiffer>false</organismsDiffer>
    <experiments>3</experiments>
</comment>
<comment type="subcellular location">
    <subcellularLocation>
        <location evidence="3">Cytoplasm</location>
        <location evidence="3">Cytoskeleton</location>
    </subcellularLocation>
</comment>
<comment type="alternative products">
    <event type="alternative splicing"/>
    <isoform>
        <id>P42684-1</id>
        <name>1</name>
        <name>IB</name>
        <name>1BLCTL</name>
        <sequence type="displayed"/>
    </isoform>
    <isoform>
        <id>P42684-2</id>
        <name>2</name>
        <name>IA</name>
        <name>1ASCTL</name>
        <sequence type="described" ref="VSP_004961"/>
    </isoform>
    <isoform>
        <id>P42684-3</id>
        <name>3</name>
        <name>IC</name>
        <name>1ALCTL</name>
        <sequence type="described" ref="VSP_017112"/>
    </isoform>
    <isoform>
        <id>P42684-4</id>
        <name>4</name>
        <name>1ASCTS</name>
        <sequence type="described" ref="VSP_004961 VSP_021308"/>
    </isoform>
    <isoform>
        <id>P42684-5</id>
        <name>5</name>
        <name>1BLCTS</name>
        <sequence type="described" ref="VSP_021308"/>
    </isoform>
    <isoform>
        <id>P42684-6</id>
        <name>6</name>
        <name>1BSCTL</name>
        <sequence type="described" ref="VSP_041772"/>
    </isoform>
    <isoform>
        <id>P42684-7</id>
        <name>7</name>
        <name>1BSCTS</name>
        <sequence type="described" ref="VSP_041772 VSP_021308"/>
    </isoform>
    <isoform>
        <id>P42684-10</id>
        <name>10</name>
        <name>1ALCTS</name>
        <sequence type="described" ref="VSP_017112 VSP_021308"/>
    </isoform>
    <isoform>
        <id>P42684-8</id>
        <name>8</name>
        <sequence type="described" ref="VSP_041772 VSP_041773 VSP_041774"/>
    </isoform>
</comment>
<comment type="tissue specificity">
    <text>Widely expressed.</text>
</comment>
<comment type="domain">
    <text evidence="1">Contains two distinct classes of F-actin-binding domains. Although both can bind F-actin, the 2 are required to bundle actin filaments (By similarity).</text>
</comment>
<comment type="PTM">
    <text evidence="1">Phosphorylated at Tyr-261 by ABL1 in response to oxidative stress. Phosphorylated by PDGFRB (By similarity).</text>
</comment>
<comment type="PTM">
    <text evidence="11">Polyubiquitinated. Polyubiquitination of ABL2 leads to degradation.</text>
</comment>
<comment type="similarity">
    <text evidence="5">Belongs to the protein kinase superfamily. Tyr protein kinase family. ABL subfamily.</text>
</comment>
<comment type="sequence caution" evidence="25">
    <conflict type="erroneous initiation">
        <sequence resource="EMBL-CDS" id="CAD98092"/>
    </conflict>
    <text>Extended N-terminus.</text>
</comment>
<comment type="online information" name="Atlas of Genetics and Cytogenetics in Oncology and Haematology">
    <link uri="https://atlasgeneticsoncology.org/gene/226/ABL2"/>
</comment>
<proteinExistence type="evidence at protein level"/>
<evidence type="ECO:0000250" key="1"/>
<evidence type="ECO:0000250" key="2">
    <source>
        <dbReference type="UniProtKB" id="P00519"/>
    </source>
</evidence>
<evidence type="ECO:0000250" key="3">
    <source>
        <dbReference type="UniProtKB" id="Q4JIM5"/>
    </source>
</evidence>
<evidence type="ECO:0000255" key="4"/>
<evidence type="ECO:0000255" key="5">
    <source>
        <dbReference type="PROSITE-ProRule" id="PRU00159"/>
    </source>
</evidence>
<evidence type="ECO:0000255" key="6">
    <source>
        <dbReference type="PROSITE-ProRule" id="PRU00191"/>
    </source>
</evidence>
<evidence type="ECO:0000255" key="7">
    <source>
        <dbReference type="PROSITE-ProRule" id="PRU00192"/>
    </source>
</evidence>
<evidence type="ECO:0000255" key="8">
    <source>
        <dbReference type="PROSITE-ProRule" id="PRU10028"/>
    </source>
</evidence>
<evidence type="ECO:0000256" key="9">
    <source>
        <dbReference type="SAM" id="MobiDB-lite"/>
    </source>
</evidence>
<evidence type="ECO:0000269" key="10">
    <source>
    </source>
</evidence>
<evidence type="ECO:0000269" key="11">
    <source>
    </source>
</evidence>
<evidence type="ECO:0000269" key="12">
    <source>
    </source>
</evidence>
<evidence type="ECO:0000269" key="13">
    <source>
    </source>
</evidence>
<evidence type="ECO:0000269" key="14">
    <source>
    </source>
</evidence>
<evidence type="ECO:0000269" key="15">
    <source>
    </source>
</evidence>
<evidence type="ECO:0000269" key="16">
    <source>
    </source>
</evidence>
<evidence type="ECO:0000269" key="17">
    <source>
    </source>
</evidence>
<evidence type="ECO:0000269" key="18">
    <source>
    </source>
</evidence>
<evidence type="ECO:0000269" key="19">
    <source>
    </source>
</evidence>
<evidence type="ECO:0000269" key="20">
    <source ref="5"/>
</evidence>
<evidence type="ECO:0000303" key="21">
    <source>
    </source>
</evidence>
<evidence type="ECO:0000303" key="22">
    <source>
    </source>
</evidence>
<evidence type="ECO:0000303" key="23">
    <source>
    </source>
</evidence>
<evidence type="ECO:0000303" key="24">
    <source>
    </source>
</evidence>
<evidence type="ECO:0000305" key="25"/>
<evidence type="ECO:0007744" key="26">
    <source>
    </source>
</evidence>
<evidence type="ECO:0007744" key="27">
    <source>
    </source>
</evidence>
<evidence type="ECO:0007744" key="28">
    <source>
    </source>
</evidence>
<evidence type="ECO:0007744" key="29">
    <source>
    </source>
</evidence>
<evidence type="ECO:0007744" key="30">
    <source>
    </source>
</evidence>
<evidence type="ECO:0007744" key="31">
    <source>
    </source>
</evidence>
<evidence type="ECO:0007744" key="32">
    <source>
    </source>
</evidence>
<evidence type="ECO:0007744" key="33">
    <source>
    </source>
</evidence>
<evidence type="ECO:0007744" key="34">
    <source>
    </source>
</evidence>
<evidence type="ECO:0007744" key="35">
    <source>
    </source>
</evidence>
<evidence type="ECO:0007829" key="36">
    <source>
        <dbReference type="PDB" id="2ECD"/>
    </source>
</evidence>
<evidence type="ECO:0007829" key="37">
    <source>
        <dbReference type="PDB" id="2KK1"/>
    </source>
</evidence>
<evidence type="ECO:0007829" key="38">
    <source>
        <dbReference type="PDB" id="2XYN"/>
    </source>
</evidence>
<evidence type="ECO:0007829" key="39">
    <source>
        <dbReference type="PDB" id="3GVU"/>
    </source>
</evidence>
<evidence type="ECO:0007829" key="40">
    <source>
        <dbReference type="PDB" id="3HMI"/>
    </source>
</evidence>
<evidence type="ECO:0007829" key="41">
    <source>
        <dbReference type="PDB" id="4EIH"/>
    </source>
</evidence>
<evidence type="ECO:0007829" key="42">
    <source>
        <dbReference type="PDB" id="5NP5"/>
    </source>
</evidence>
<reference key="1">
    <citation type="journal article" date="1990" name="Proc. Natl. Acad. Sci. U.S.A.">
        <title>The complete coding sequence of arg defines the Abelson subfamily of cytoplasmic tyrosine kinases.</title>
        <authorList>
            <person name="Kruh G.D."/>
            <person name="Perego R."/>
            <person name="Miki T."/>
            <person name="Aaronson S.A."/>
        </authorList>
    </citation>
    <scope>NUCLEOTIDE SEQUENCE [MRNA] (ISOFORM 1)</scope>
    <scope>ALTERNATIVE SPLICING (ISOFORM 2)</scope>
</reference>
<reference key="2">
    <citation type="journal article" date="2008" name="J. Cell. Biochem.">
        <title>Eight full-length abelson related gene (Arg) isoforms are constitutively expressed in caki-1 cell line and cell distribution of two isoforms has been analyzed after transfection.</title>
        <authorList>
            <person name="Bianchi C."/>
            <person name="Torsello B."/>
            <person name="Angeloni V."/>
            <person name="Bombelli S."/>
            <person name="Soldi M."/>
            <person name="Invernizzi L."/>
            <person name="Brambilla P."/>
            <person name="Perego R.A."/>
        </authorList>
    </citation>
    <scope>NUCLEOTIDE SEQUENCE [MRNA] (ISOFORMS 4; 5; 6 AND 7)</scope>
    <scope>ALTERNATIVE SPLICING (ISOFORM 10)</scope>
    <scope>VARIANT THR-12 (ISOFORM 4)</scope>
</reference>
<reference key="3">
    <citation type="journal article" date="2004" name="Nat. Genet.">
        <title>Complete sequencing and characterization of 21,243 full-length human cDNAs.</title>
        <authorList>
            <person name="Ota T."/>
            <person name="Suzuki Y."/>
            <person name="Nishikawa T."/>
            <person name="Otsuki T."/>
            <person name="Sugiyama T."/>
            <person name="Irie R."/>
            <person name="Wakamatsu A."/>
            <person name="Hayashi K."/>
            <person name="Sato H."/>
            <person name="Nagai K."/>
            <person name="Kimura K."/>
            <person name="Makita H."/>
            <person name="Sekine M."/>
            <person name="Obayashi M."/>
            <person name="Nishi T."/>
            <person name="Shibahara T."/>
            <person name="Tanaka T."/>
            <person name="Ishii S."/>
            <person name="Yamamoto J."/>
            <person name="Saito K."/>
            <person name="Kawai Y."/>
            <person name="Isono Y."/>
            <person name="Nakamura Y."/>
            <person name="Nagahari K."/>
            <person name="Murakami K."/>
            <person name="Yasuda T."/>
            <person name="Iwayanagi T."/>
            <person name="Wagatsuma M."/>
            <person name="Shiratori A."/>
            <person name="Sudo H."/>
            <person name="Hosoiri T."/>
            <person name="Kaku Y."/>
            <person name="Kodaira H."/>
            <person name="Kondo H."/>
            <person name="Sugawara M."/>
            <person name="Takahashi M."/>
            <person name="Kanda K."/>
            <person name="Yokoi T."/>
            <person name="Furuya T."/>
            <person name="Kikkawa E."/>
            <person name="Omura Y."/>
            <person name="Abe K."/>
            <person name="Kamihara K."/>
            <person name="Katsuta N."/>
            <person name="Sato K."/>
            <person name="Tanikawa M."/>
            <person name="Yamazaki M."/>
            <person name="Ninomiya K."/>
            <person name="Ishibashi T."/>
            <person name="Yamashita H."/>
            <person name="Murakawa K."/>
            <person name="Fujimori K."/>
            <person name="Tanai H."/>
            <person name="Kimata M."/>
            <person name="Watanabe M."/>
            <person name="Hiraoka S."/>
            <person name="Chiba Y."/>
            <person name="Ishida S."/>
            <person name="Ono Y."/>
            <person name="Takiguchi S."/>
            <person name="Watanabe S."/>
            <person name="Yosida M."/>
            <person name="Hotuta T."/>
            <person name="Kusano J."/>
            <person name="Kanehori K."/>
            <person name="Takahashi-Fujii A."/>
            <person name="Hara H."/>
            <person name="Tanase T.-O."/>
            <person name="Nomura Y."/>
            <person name="Togiya S."/>
            <person name="Komai F."/>
            <person name="Hara R."/>
            <person name="Takeuchi K."/>
            <person name="Arita M."/>
            <person name="Imose N."/>
            <person name="Musashino K."/>
            <person name="Yuuki H."/>
            <person name="Oshima A."/>
            <person name="Sasaki N."/>
            <person name="Aotsuka S."/>
            <person name="Yoshikawa Y."/>
            <person name="Matsunawa H."/>
            <person name="Ichihara T."/>
            <person name="Shiohata N."/>
            <person name="Sano S."/>
            <person name="Moriya S."/>
            <person name="Momiyama H."/>
            <person name="Satoh N."/>
            <person name="Takami S."/>
            <person name="Terashima Y."/>
            <person name="Suzuki O."/>
            <person name="Nakagawa S."/>
            <person name="Senoh A."/>
            <person name="Mizoguchi H."/>
            <person name="Goto Y."/>
            <person name="Shimizu F."/>
            <person name="Wakebe H."/>
            <person name="Hishigaki H."/>
            <person name="Watanabe T."/>
            <person name="Sugiyama A."/>
            <person name="Takemoto M."/>
            <person name="Kawakami B."/>
            <person name="Yamazaki M."/>
            <person name="Watanabe K."/>
            <person name="Kumagai A."/>
            <person name="Itakura S."/>
            <person name="Fukuzumi Y."/>
            <person name="Fujimori Y."/>
            <person name="Komiyama M."/>
            <person name="Tashiro H."/>
            <person name="Tanigami A."/>
            <person name="Fujiwara T."/>
            <person name="Ono T."/>
            <person name="Yamada K."/>
            <person name="Fujii Y."/>
            <person name="Ozaki K."/>
            <person name="Hirao M."/>
            <person name="Ohmori Y."/>
            <person name="Kawabata A."/>
            <person name="Hikiji T."/>
            <person name="Kobatake N."/>
            <person name="Inagaki H."/>
            <person name="Ikema Y."/>
            <person name="Okamoto S."/>
            <person name="Okitani R."/>
            <person name="Kawakami T."/>
            <person name="Noguchi S."/>
            <person name="Itoh T."/>
            <person name="Shigeta K."/>
            <person name="Senba T."/>
            <person name="Matsumura K."/>
            <person name="Nakajima Y."/>
            <person name="Mizuno T."/>
            <person name="Morinaga M."/>
            <person name="Sasaki M."/>
            <person name="Togashi T."/>
            <person name="Oyama M."/>
            <person name="Hata H."/>
            <person name="Watanabe M."/>
            <person name="Komatsu T."/>
            <person name="Mizushima-Sugano J."/>
            <person name="Satoh T."/>
            <person name="Shirai Y."/>
            <person name="Takahashi Y."/>
            <person name="Nakagawa K."/>
            <person name="Okumura K."/>
            <person name="Nagase T."/>
            <person name="Nomura N."/>
            <person name="Kikuchi H."/>
            <person name="Masuho Y."/>
            <person name="Yamashita R."/>
            <person name="Nakai K."/>
            <person name="Yada T."/>
            <person name="Nakamura Y."/>
            <person name="Ohara O."/>
            <person name="Isogai T."/>
            <person name="Sugano S."/>
        </authorList>
    </citation>
    <scope>NUCLEOTIDE SEQUENCE [LARGE SCALE MRNA] (ISOFORM 8)</scope>
</reference>
<reference key="4">
    <citation type="journal article" date="2007" name="BMC Genomics">
        <title>The full-ORF clone resource of the German cDNA consortium.</title>
        <authorList>
            <person name="Bechtel S."/>
            <person name="Rosenfelder H."/>
            <person name="Duda A."/>
            <person name="Schmidt C.P."/>
            <person name="Ernst U."/>
            <person name="Wellenreuther R."/>
            <person name="Mehrle A."/>
            <person name="Schuster C."/>
            <person name="Bahr A."/>
            <person name="Bloecker H."/>
            <person name="Heubner D."/>
            <person name="Hoerlein A."/>
            <person name="Michel G."/>
            <person name="Wedler H."/>
            <person name="Koehrer K."/>
            <person name="Ottenwaelder B."/>
            <person name="Poustka A."/>
            <person name="Wiemann S."/>
            <person name="Schupp I."/>
        </authorList>
    </citation>
    <scope>NUCLEOTIDE SEQUENCE [LARGE SCALE MRNA] (ISOFORM 4)</scope>
    <source>
        <tissue>Uterine endothelium</tissue>
    </source>
</reference>
<reference key="5">
    <citation type="submission" date="2005-04" db="EMBL/GenBank/DDBJ databases">
        <authorList>
            <consortium name="NIEHS SNPs program"/>
        </authorList>
    </citation>
    <scope>NUCLEOTIDE SEQUENCE [GENOMIC DNA]</scope>
    <scope>VARIANTS ARG-930; MET-946; ARG-996; ASN-1085 AND ALA-1101</scope>
</reference>
<reference key="6">
    <citation type="journal article" date="2006" name="Nature">
        <title>The DNA sequence and biological annotation of human chromosome 1.</title>
        <authorList>
            <person name="Gregory S.G."/>
            <person name="Barlow K.F."/>
            <person name="McLay K.E."/>
            <person name="Kaul R."/>
            <person name="Swarbreck D."/>
            <person name="Dunham A."/>
            <person name="Scott C.E."/>
            <person name="Howe K.L."/>
            <person name="Woodfine K."/>
            <person name="Spencer C.C.A."/>
            <person name="Jones M.C."/>
            <person name="Gillson C."/>
            <person name="Searle S."/>
            <person name="Zhou Y."/>
            <person name="Kokocinski F."/>
            <person name="McDonald L."/>
            <person name="Evans R."/>
            <person name="Phillips K."/>
            <person name="Atkinson A."/>
            <person name="Cooper R."/>
            <person name="Jones C."/>
            <person name="Hall R.E."/>
            <person name="Andrews T.D."/>
            <person name="Lloyd C."/>
            <person name="Ainscough R."/>
            <person name="Almeida J.P."/>
            <person name="Ambrose K.D."/>
            <person name="Anderson F."/>
            <person name="Andrew R.W."/>
            <person name="Ashwell R.I.S."/>
            <person name="Aubin K."/>
            <person name="Babbage A.K."/>
            <person name="Bagguley C.L."/>
            <person name="Bailey J."/>
            <person name="Beasley H."/>
            <person name="Bethel G."/>
            <person name="Bird C.P."/>
            <person name="Bray-Allen S."/>
            <person name="Brown J.Y."/>
            <person name="Brown A.J."/>
            <person name="Buckley D."/>
            <person name="Burton J."/>
            <person name="Bye J."/>
            <person name="Carder C."/>
            <person name="Chapman J.C."/>
            <person name="Clark S.Y."/>
            <person name="Clarke G."/>
            <person name="Clee C."/>
            <person name="Cobley V."/>
            <person name="Collier R.E."/>
            <person name="Corby N."/>
            <person name="Coville G.J."/>
            <person name="Davies J."/>
            <person name="Deadman R."/>
            <person name="Dunn M."/>
            <person name="Earthrowl M."/>
            <person name="Ellington A.G."/>
            <person name="Errington H."/>
            <person name="Frankish A."/>
            <person name="Frankland J."/>
            <person name="French L."/>
            <person name="Garner P."/>
            <person name="Garnett J."/>
            <person name="Gay L."/>
            <person name="Ghori M.R.J."/>
            <person name="Gibson R."/>
            <person name="Gilby L.M."/>
            <person name="Gillett W."/>
            <person name="Glithero R.J."/>
            <person name="Grafham D.V."/>
            <person name="Griffiths C."/>
            <person name="Griffiths-Jones S."/>
            <person name="Grocock R."/>
            <person name="Hammond S."/>
            <person name="Harrison E.S.I."/>
            <person name="Hart E."/>
            <person name="Haugen E."/>
            <person name="Heath P.D."/>
            <person name="Holmes S."/>
            <person name="Holt K."/>
            <person name="Howden P.J."/>
            <person name="Hunt A.R."/>
            <person name="Hunt S.E."/>
            <person name="Hunter G."/>
            <person name="Isherwood J."/>
            <person name="James R."/>
            <person name="Johnson C."/>
            <person name="Johnson D."/>
            <person name="Joy A."/>
            <person name="Kay M."/>
            <person name="Kershaw J.K."/>
            <person name="Kibukawa M."/>
            <person name="Kimberley A.M."/>
            <person name="King A."/>
            <person name="Knights A.J."/>
            <person name="Lad H."/>
            <person name="Laird G."/>
            <person name="Lawlor S."/>
            <person name="Leongamornlert D.A."/>
            <person name="Lloyd D.M."/>
            <person name="Loveland J."/>
            <person name="Lovell J."/>
            <person name="Lush M.J."/>
            <person name="Lyne R."/>
            <person name="Martin S."/>
            <person name="Mashreghi-Mohammadi M."/>
            <person name="Matthews L."/>
            <person name="Matthews N.S.W."/>
            <person name="McLaren S."/>
            <person name="Milne S."/>
            <person name="Mistry S."/>
            <person name="Moore M.J.F."/>
            <person name="Nickerson T."/>
            <person name="O'Dell C.N."/>
            <person name="Oliver K."/>
            <person name="Palmeiri A."/>
            <person name="Palmer S.A."/>
            <person name="Parker A."/>
            <person name="Patel D."/>
            <person name="Pearce A.V."/>
            <person name="Peck A.I."/>
            <person name="Pelan S."/>
            <person name="Phelps K."/>
            <person name="Phillimore B.J."/>
            <person name="Plumb R."/>
            <person name="Rajan J."/>
            <person name="Raymond C."/>
            <person name="Rouse G."/>
            <person name="Saenphimmachak C."/>
            <person name="Sehra H.K."/>
            <person name="Sheridan E."/>
            <person name="Shownkeen R."/>
            <person name="Sims S."/>
            <person name="Skuce C.D."/>
            <person name="Smith M."/>
            <person name="Steward C."/>
            <person name="Subramanian S."/>
            <person name="Sycamore N."/>
            <person name="Tracey A."/>
            <person name="Tromans A."/>
            <person name="Van Helmond Z."/>
            <person name="Wall M."/>
            <person name="Wallis J.M."/>
            <person name="White S."/>
            <person name="Whitehead S.L."/>
            <person name="Wilkinson J.E."/>
            <person name="Willey D.L."/>
            <person name="Williams H."/>
            <person name="Wilming L."/>
            <person name="Wray P.W."/>
            <person name="Wu Z."/>
            <person name="Coulson A."/>
            <person name="Vaudin M."/>
            <person name="Sulston J.E."/>
            <person name="Durbin R.M."/>
            <person name="Hubbard T."/>
            <person name="Wooster R."/>
            <person name="Dunham I."/>
            <person name="Carter N.P."/>
            <person name="McVean G."/>
            <person name="Ross M.T."/>
            <person name="Harrow J."/>
            <person name="Olson M.V."/>
            <person name="Beck S."/>
            <person name="Rogers J."/>
            <person name="Bentley D.R."/>
        </authorList>
    </citation>
    <scope>NUCLEOTIDE SEQUENCE [LARGE SCALE GENOMIC DNA]</scope>
</reference>
<reference key="7">
    <citation type="submission" date="2005-07" db="EMBL/GenBank/DDBJ databases">
        <authorList>
            <person name="Mural R.J."/>
            <person name="Istrail S."/>
            <person name="Sutton G.G."/>
            <person name="Florea L."/>
            <person name="Halpern A.L."/>
            <person name="Mobarry C.M."/>
            <person name="Lippert R."/>
            <person name="Walenz B."/>
            <person name="Shatkay H."/>
            <person name="Dew I."/>
            <person name="Miller J.R."/>
            <person name="Flanigan M.J."/>
            <person name="Edwards N.J."/>
            <person name="Bolanos R."/>
            <person name="Fasulo D."/>
            <person name="Halldorsson B.V."/>
            <person name="Hannenhalli S."/>
            <person name="Turner R."/>
            <person name="Yooseph S."/>
            <person name="Lu F."/>
            <person name="Nusskern D.R."/>
            <person name="Shue B.C."/>
            <person name="Zheng X.H."/>
            <person name="Zhong F."/>
            <person name="Delcher A.L."/>
            <person name="Huson D.H."/>
            <person name="Kravitz S.A."/>
            <person name="Mouchard L."/>
            <person name="Reinert K."/>
            <person name="Remington K.A."/>
            <person name="Clark A.G."/>
            <person name="Waterman M.S."/>
            <person name="Eichler E.E."/>
            <person name="Adams M.D."/>
            <person name="Hunkapiller M.W."/>
            <person name="Myers E.W."/>
            <person name="Venter J.C."/>
        </authorList>
    </citation>
    <scope>NUCLEOTIDE SEQUENCE [LARGE SCALE GENOMIC DNA]</scope>
</reference>
<reference key="8">
    <citation type="journal article" date="2004" name="Genome Res.">
        <title>The status, quality, and expansion of the NIH full-length cDNA project: the Mammalian Gene Collection (MGC).</title>
        <authorList>
            <consortium name="The MGC Project Team"/>
        </authorList>
    </citation>
    <scope>NUCLEOTIDE SEQUENCE [LARGE SCALE MRNA] (ISOFORM 3)</scope>
    <source>
        <tissue>Brain</tissue>
    </source>
</reference>
<reference key="9">
    <citation type="journal article" date="1986" name="Science">
        <title>A novel human gene closely related to the abl proto-oncogene.</title>
        <authorList>
            <person name="Kruh G.D."/>
            <person name="King C.R."/>
            <person name="Kraus M.H."/>
            <person name="Popescu N.C."/>
            <person name="Amsbaugh S.C."/>
            <person name="McBride W.O."/>
            <person name="Aaronson S.A."/>
        </authorList>
    </citation>
    <scope>NUCLEOTIDE SEQUENCE [MRNA] OF 343-469</scope>
</reference>
<reference key="10">
    <citation type="journal article" date="2003" name="Mol. Cell. Biol.">
        <title>Two distinct phosphorylation pathways have additive effects on Abl family kinase activation.</title>
        <authorList>
            <person name="Tanis K.Q."/>
            <person name="Veach D."/>
            <person name="Duewel H.S."/>
            <person name="Bornmann W.G."/>
            <person name="Koleske A.J."/>
        </authorList>
    </citation>
    <scope>PHOSPHORYLATION AT TYR-272; TYR-439; TYR-568 AND TYR-683</scope>
    <scope>ACTIVITY REGULATION</scope>
</reference>
<reference key="11">
    <citation type="journal article" date="2005" name="Curr. Biol.">
        <title>RIN1 is an ABL tyrosine kinase activator and a regulator of epithelial-cell adhesion and migration.</title>
        <authorList>
            <person name="Hu H."/>
            <person name="Bliss J.M."/>
            <person name="Wang Y."/>
            <person name="Colicelli J."/>
        </authorList>
    </citation>
    <scope>INTERACTION WITH RIN1</scope>
    <scope>FUNCTION</scope>
    <scope>ACTIVITY REGULATION</scope>
</reference>
<reference key="12">
    <citation type="journal article" date="2005" name="Oncogene">
        <title>Ubiquitination and degradation of the Arg tyrosine kinase is regulated by oxidative stress.</title>
        <authorList>
            <person name="Cao C."/>
            <person name="Li Y."/>
            <person name="Leng Y."/>
            <person name="Li P."/>
            <person name="Ma Q."/>
            <person name="Kufe D."/>
        </authorList>
    </citation>
    <scope>FUNCTION</scope>
    <scope>PHOSPHORYLATION AT TYR-261</scope>
    <scope>UBIQUITINATION</scope>
</reference>
<reference key="13">
    <citation type="journal article" date="2006" name="Mol. Cell">
        <title>Interaction between c-Abl and Arg tyrosine kinases and proteasome subunit PSMA7 regulates proteasome degradation.</title>
        <authorList>
            <person name="Liu X."/>
            <person name="Huang W."/>
            <person name="Li C."/>
            <person name="Li P."/>
            <person name="Yuan J."/>
            <person name="Li X."/>
            <person name="Qiu X.B."/>
            <person name="Ma Q."/>
            <person name="Cao C."/>
        </authorList>
    </citation>
    <scope>FUNCTION</scope>
    <scope>INTERACTION WITH PSMA7</scope>
</reference>
<reference key="14">
    <citation type="journal article" date="2006" name="Nat. Biotechnol.">
        <title>A probability-based approach for high-throughput protein phosphorylation analysis and site localization.</title>
        <authorList>
            <person name="Beausoleil S.A."/>
            <person name="Villen J."/>
            <person name="Gerber S.A."/>
            <person name="Rush J."/>
            <person name="Gygi S.P."/>
        </authorList>
    </citation>
    <scope>IDENTIFICATION BY MASS SPECTROMETRY [LARGE SCALE ANALYSIS]</scope>
    <source>
        <tissue>Cervix carcinoma</tissue>
    </source>
</reference>
<reference key="15">
    <citation type="journal article" date="2007" name="Curr. Biol.">
        <title>A critical role for cortactin phosphorylation by Abl-family kinases in PDGF-induced dorsal-wave formation.</title>
        <authorList>
            <person name="Boyle S.N."/>
            <person name="Michaud G.A."/>
            <person name="Schweitzer B."/>
            <person name="Predki P.F."/>
            <person name="Koleske A.J."/>
        </authorList>
    </citation>
    <scope>FUNCTION</scope>
</reference>
<reference key="16">
    <citation type="journal article" date="2007" name="Science">
        <title>ATM and ATR substrate analysis reveals extensive protein networks responsive to DNA damage.</title>
        <authorList>
            <person name="Matsuoka S."/>
            <person name="Ballif B.A."/>
            <person name="Smogorzewska A."/>
            <person name="McDonald E.R. III"/>
            <person name="Hurov K.E."/>
            <person name="Luo J."/>
            <person name="Bakalarski C.E."/>
            <person name="Zhao Z."/>
            <person name="Solimini N."/>
            <person name="Lerenthal Y."/>
            <person name="Shiloh Y."/>
            <person name="Gygi S.P."/>
            <person name="Elledge S.J."/>
        </authorList>
    </citation>
    <scope>PHOSPHORYLATION [LARGE SCALE ANALYSIS] AT SER-817</scope>
    <scope>IDENTIFICATION BY MASS SPECTROMETRY [LARGE SCALE ANALYSIS]</scope>
    <source>
        <tissue>Embryonic kidney</tissue>
    </source>
</reference>
<reference key="17">
    <citation type="journal article" date="2008" name="J. Biol. Chem.">
        <title>Abl kinases regulate autophagy by promoting the trafficking and function of lysosomal components.</title>
        <authorList>
            <person name="Yogalingam G."/>
            <person name="Pendergast A.M."/>
        </authorList>
    </citation>
    <scope>FUNCTION</scope>
</reference>
<reference key="18">
    <citation type="journal article" date="2003" name="J. Cell Sci.">
        <title>Regulation of F-actin-dependent processes by the Abl family of tyrosine kinases.</title>
        <authorList>
            <person name="Woodring P.J."/>
            <person name="Hunter T."/>
            <person name="Wang J.Y."/>
        </authorList>
    </citation>
    <scope>REVIEW ON FUNCTION</scope>
</reference>
<reference key="19">
    <citation type="journal article" date="2004" name="Trends Cell Biol.">
        <title>How do Abl family kinases regulate cell shape and movement?</title>
        <authorList>
            <person name="Hernandez S.E."/>
            <person name="Krishnaswami M."/>
            <person name="Miller A.L."/>
            <person name="Koleske A.J."/>
        </authorList>
    </citation>
    <scope>REVIEW ON FUNCTION</scope>
</reference>
<reference key="20">
    <citation type="journal article" date="2008" name="Mol. Cell">
        <title>Kinase-selective enrichment enables quantitative phosphoproteomics of the kinome across the cell cycle.</title>
        <authorList>
            <person name="Daub H."/>
            <person name="Olsen J.V."/>
            <person name="Bairlein M."/>
            <person name="Gnad F."/>
            <person name="Oppermann F.S."/>
            <person name="Korner R."/>
            <person name="Greff Z."/>
            <person name="Keri G."/>
            <person name="Stemmann O."/>
            <person name="Mann M."/>
        </authorList>
    </citation>
    <scope>PHOSPHORYLATION [LARGE SCALE ANALYSIS] AT SER-275 AND SER-915</scope>
    <scope>IDENTIFICATION BY MASS SPECTROMETRY [LARGE SCALE ANALYSIS]</scope>
    <source>
        <tissue>Cervix carcinoma</tissue>
    </source>
</reference>
<reference key="21">
    <citation type="journal article" date="2008" name="Proc. Natl. Acad. Sci. U.S.A.">
        <title>A quantitative atlas of mitotic phosphorylation.</title>
        <authorList>
            <person name="Dephoure N."/>
            <person name="Zhou C."/>
            <person name="Villen J."/>
            <person name="Beausoleil S.A."/>
            <person name="Bakalarski C.E."/>
            <person name="Elledge S.J."/>
            <person name="Gygi S.P."/>
        </authorList>
    </citation>
    <scope>PHOSPHORYLATION [LARGE SCALE ANALYSIS] AT SER-620; SER-631; SER-633; SER-655; SER-817; SER-820 AND SER-936</scope>
    <scope>IDENTIFICATION BY MASS SPECTROMETRY [LARGE SCALE ANALYSIS]</scope>
    <source>
        <tissue>Cervix carcinoma</tissue>
    </source>
</reference>
<reference key="22">
    <citation type="journal article" date="2008" name="Trends Biochem. Sci.">
        <title>Emerging roles of Abl family tyrosine kinases in microbial pathogenesis.</title>
        <authorList>
            <person name="Backert S."/>
            <person name="Feller S.M."/>
            <person name="Wessler S."/>
        </authorList>
    </citation>
    <scope>REVIEW ON FUNCTION</scope>
</reference>
<reference key="23">
    <citation type="journal article" date="2009" name="Anal. Chem.">
        <title>Lys-N and trypsin cover complementary parts of the phosphoproteome in a refined SCX-based approach.</title>
        <authorList>
            <person name="Gauci S."/>
            <person name="Helbig A.O."/>
            <person name="Slijper M."/>
            <person name="Krijgsveld J."/>
            <person name="Heck A.J."/>
            <person name="Mohammed S."/>
        </authorList>
    </citation>
    <scope>IDENTIFICATION BY MASS SPECTROMETRY [LARGE SCALE ANALYSIS]</scope>
</reference>
<reference key="24">
    <citation type="journal article" date="2009" name="Mol. Cell. Proteomics">
        <title>Large-scale proteomics analysis of the human kinome.</title>
        <authorList>
            <person name="Oppermann F.S."/>
            <person name="Gnad F."/>
            <person name="Olsen J.V."/>
            <person name="Hornberger R."/>
            <person name="Greff Z."/>
            <person name="Keri G."/>
            <person name="Mann M."/>
            <person name="Daub H."/>
        </authorList>
    </citation>
    <scope>PHOSPHORYLATION [LARGE SCALE ANALYSIS] AT TYR-718</scope>
    <scope>PHOSPHORYLATION [LARGE SCALE ANALYSIS] AT TYR-668 (ISOFORM 10)</scope>
    <scope>PHOSPHORYLATION [LARGE SCALE ANALYSIS] AT TYR-647 (ISOFORM 4)</scope>
    <scope>PHOSPHORYLATION [LARGE SCALE ANALYSIS] AT TYR-683 (ISOFORM 5)</scope>
    <scope>PHOSPHORYLATION [LARGE SCALE ANALYSIS] AT TYR-662 (ISOFORM 7)</scope>
    <scope>IDENTIFICATION BY MASS SPECTROMETRY [LARGE SCALE ANALYSIS]</scope>
</reference>
<reference key="25">
    <citation type="journal article" date="2009" name="PLoS ONE">
        <title>Unc119 protects from Shigella infection by inhibiting the Abl family kinases.</title>
        <authorList>
            <person name="Vepachedu R."/>
            <person name="Karim Z."/>
            <person name="Patel O."/>
            <person name="Goplen N."/>
            <person name="Alam R."/>
        </authorList>
    </citation>
    <scope>IDENTIFICATION IN A COMPLEX WITH UNC119: ABL1 AND CRK</scope>
</reference>
<reference key="26">
    <citation type="journal article" date="2009" name="Sci. Signal.">
        <title>Quantitative phosphoproteomic analysis of T cell receptor signaling reveals system-wide modulation of protein-protein interactions.</title>
        <authorList>
            <person name="Mayya V."/>
            <person name="Lundgren D.H."/>
            <person name="Hwang S.-I."/>
            <person name="Rezaul K."/>
            <person name="Wu L."/>
            <person name="Eng J.K."/>
            <person name="Rodionov V."/>
            <person name="Han D.K."/>
        </authorList>
    </citation>
    <scope>PHOSPHORYLATION [LARGE SCALE ANALYSIS] AT SER-820 AND SER-936</scope>
    <scope>IDENTIFICATION BY MASS SPECTROMETRY [LARGE SCALE ANALYSIS]</scope>
    <source>
        <tissue>Leukemic T-cell</tissue>
    </source>
</reference>
<reference key="27">
    <citation type="journal article" date="2010" name="Sci. Signal.">
        <title>Quantitative phosphoproteomics reveals widespread full phosphorylation site occupancy during mitosis.</title>
        <authorList>
            <person name="Olsen J.V."/>
            <person name="Vermeulen M."/>
            <person name="Santamaria A."/>
            <person name="Kumar C."/>
            <person name="Miller M.L."/>
            <person name="Jensen L.J."/>
            <person name="Gnad F."/>
            <person name="Cox J."/>
            <person name="Jensen T.S."/>
            <person name="Nigg E.A."/>
            <person name="Brunak S."/>
            <person name="Mann M."/>
        </authorList>
    </citation>
    <scope>PHOSPHORYLATION [LARGE SCALE ANALYSIS] AT SER-631 AND SER-936</scope>
    <scope>IDENTIFICATION BY MASS SPECTROMETRY [LARGE SCALE ANALYSIS]</scope>
    <source>
        <tissue>Cervix carcinoma</tissue>
    </source>
</reference>
<reference key="28">
    <citation type="journal article" date="2010" name="Sci. Signal.">
        <title>ABL tyrosine kinases: evolution of function, regulation, and specificity.</title>
        <authorList>
            <person name="Colicelli J."/>
        </authorList>
    </citation>
    <scope>REVIEW ON FUNCTION</scope>
    <scope>DOMAIN</scope>
</reference>
<reference key="29">
    <citation type="journal article" date="2011" name="Sci. Signal.">
        <title>System-wide temporal characterization of the proteome and phosphoproteome of human embryonic stem cell differentiation.</title>
        <authorList>
            <person name="Rigbolt K.T."/>
            <person name="Prokhorova T.A."/>
            <person name="Akimov V."/>
            <person name="Henningsen J."/>
            <person name="Johansen P.T."/>
            <person name="Kratchmarova I."/>
            <person name="Kassem M."/>
            <person name="Mann M."/>
            <person name="Olsen J.V."/>
            <person name="Blagoev B."/>
        </authorList>
    </citation>
    <scope>PHOSPHORYLATION [LARGE SCALE ANALYSIS] AT SER-631</scope>
    <scope>IDENTIFICATION BY MASS SPECTROMETRY [LARGE SCALE ANALYSIS]</scope>
</reference>
<reference key="30">
    <citation type="journal article" date="2013" name="J. Proteome Res.">
        <title>Toward a comprehensive characterization of a human cancer cell phosphoproteome.</title>
        <authorList>
            <person name="Zhou H."/>
            <person name="Di Palma S."/>
            <person name="Preisinger C."/>
            <person name="Peng M."/>
            <person name="Polat A.N."/>
            <person name="Heck A.J."/>
            <person name="Mohammed S."/>
        </authorList>
    </citation>
    <scope>PHOSPHORYLATION [LARGE SCALE ANALYSIS] AT SER-620; SER-631; SER-655; SER-671; SER-783; SER-817; SER-820 AND SER-936</scope>
    <scope>IDENTIFICATION BY MASS SPECTROMETRY [LARGE SCALE ANALYSIS]</scope>
    <source>
        <tissue>Cervix carcinoma</tissue>
        <tissue>Erythroleukemia</tissue>
    </source>
</reference>
<reference key="31">
    <citation type="journal article" date="2014" name="J. Proteomics">
        <title>An enzyme assisted RP-RPLC approach for in-depth analysis of human liver phosphoproteome.</title>
        <authorList>
            <person name="Bian Y."/>
            <person name="Song C."/>
            <person name="Cheng K."/>
            <person name="Dong M."/>
            <person name="Wang F."/>
            <person name="Huang J."/>
            <person name="Sun D."/>
            <person name="Wang L."/>
            <person name="Ye M."/>
            <person name="Zou H."/>
        </authorList>
    </citation>
    <scope>PHOSPHORYLATION [LARGE SCALE ANALYSIS] AT SER-620 AND SER-631</scope>
    <scope>IDENTIFICATION BY MASS SPECTROMETRY [LARGE SCALE ANALYSIS]</scope>
    <source>
        <tissue>Liver</tissue>
    </source>
</reference>
<reference key="32">
    <citation type="submission" date="2008-02" db="PDB data bank">
        <title>Solution structure of the human ABL2 SH2 domain.</title>
        <authorList>
            <consortium name="RIKEN structural genomics initiative (RSGI)"/>
        </authorList>
    </citation>
    <scope>STRUCTURE BY NMR OF 163-268</scope>
</reference>
<reference key="33">
    <citation type="journal article" date="2011" name="J. Med. Chem.">
        <title>Crystal structures of ABL-related gene (ABL2) in complex with imatinib, tozasertib (VX-680), and a type I inhibitor of the triazole carbothioamide class.</title>
        <authorList>
            <person name="Salah E."/>
            <person name="Ugochukwu E."/>
            <person name="Barr A.J."/>
            <person name="von Delft F."/>
            <person name="Knapp S."/>
            <person name="Elkins J.M."/>
        </authorList>
    </citation>
    <scope>X-RAY CRYSTALLOGRAPHY (1.65 ANGSTROMS) OF 279-546 IN COMPLEXES WITH INHIBITORS</scope>
</reference>
<reference key="34">
    <citation type="journal article" date="2012" name="Acta Crystallogr. F">
        <title>Lysozyme contamination facilitates crystallization of a heterotrimeric cortactin-Arg-lysozyme complex.</title>
        <authorList>
            <person name="Liu W."/>
            <person name="MacGrath S.M."/>
            <person name="Koleske A.J."/>
            <person name="Boggon T.J."/>
        </authorList>
    </citation>
    <scope>X-RAY CRYSTALLOGRAPHY (1.65 ANGSTROMS) OF 563-579 IN COMPLEX WITH CTTN</scope>
    <scope>INTERACTION WITH CTTN</scope>
</reference>
<reference key="35">
    <citation type="journal article" date="2007" name="Nature">
        <title>Patterns of somatic mutation in human cancer genomes.</title>
        <authorList>
            <person name="Greenman C."/>
            <person name="Stephens P."/>
            <person name="Smith R."/>
            <person name="Dalgliesh G.L."/>
            <person name="Hunter C."/>
            <person name="Bignell G."/>
            <person name="Davies H."/>
            <person name="Teague J."/>
            <person name="Butler A."/>
            <person name="Stevens C."/>
            <person name="Edkins S."/>
            <person name="O'Meara S."/>
            <person name="Vastrik I."/>
            <person name="Schmidt E.E."/>
            <person name="Avis T."/>
            <person name="Barthorpe S."/>
            <person name="Bhamra G."/>
            <person name="Buck G."/>
            <person name="Choudhury B."/>
            <person name="Clements J."/>
            <person name="Cole J."/>
            <person name="Dicks E."/>
            <person name="Forbes S."/>
            <person name="Gray K."/>
            <person name="Halliday K."/>
            <person name="Harrison R."/>
            <person name="Hills K."/>
            <person name="Hinton J."/>
            <person name="Jenkinson A."/>
            <person name="Jones D."/>
            <person name="Menzies A."/>
            <person name="Mironenko T."/>
            <person name="Perry J."/>
            <person name="Raine K."/>
            <person name="Richardson D."/>
            <person name="Shepherd R."/>
            <person name="Small A."/>
            <person name="Tofts C."/>
            <person name="Varian J."/>
            <person name="Webb T."/>
            <person name="West S."/>
            <person name="Widaa S."/>
            <person name="Yates A."/>
            <person name="Cahill D.P."/>
            <person name="Louis D.N."/>
            <person name="Goldstraw P."/>
            <person name="Nicholson A.G."/>
            <person name="Brasseur F."/>
            <person name="Looijenga L."/>
            <person name="Weber B.L."/>
            <person name="Chiew Y.-E."/>
            <person name="DeFazio A."/>
            <person name="Greaves M.F."/>
            <person name="Green A.R."/>
            <person name="Campbell P."/>
            <person name="Birney E."/>
            <person name="Easton D.F."/>
            <person name="Chenevix-Trench G."/>
            <person name="Tan M.-H."/>
            <person name="Khoo S.K."/>
            <person name="Teh B.T."/>
            <person name="Yuen S.T."/>
            <person name="Leung S.Y."/>
            <person name="Wooster R."/>
            <person name="Futreal P.A."/>
            <person name="Stratton M.R."/>
        </authorList>
    </citation>
    <scope>VARIANTS [LARGE SCALE ANALYSIS] HIS-78; GLN-99; ILE-519; SER-769; ARG-930 AND ARG-996</scope>
    <scope>VARIANT [LARGE SCALE ANALYSIS] THR-12 (ISOFORM 4)</scope>
</reference>